<sequence length="253" mass="27661">MANLGCWMLVLFVATWSDLGLCKKRPKPGGWNTGGSRYPGQGSPGGNRYPPQGGGGWGQPHGGGWGQPHGGGWGQPHGGGWGQPHGGGWGQGGGTHSQWNKPSKPKTNMKHMAGAAAAGAVVGGLGGYMLGSAMSRPIIHFGSDYEDRYYRENMHRYPNQVYYRPMDEYSNQNNFVHDCVNITIKQHTVTTTTKGENFTETDVKMMERVVEQMCITQYERESQAYYQRGSSMVLFSSPPVILLISFLIFLIVG</sequence>
<evidence type="ECO:0000250" key="1">
    <source>
        <dbReference type="UniProtKB" id="P04273"/>
    </source>
</evidence>
<evidence type="ECO:0000250" key="2">
    <source>
        <dbReference type="UniProtKB" id="P04925"/>
    </source>
</evidence>
<evidence type="ECO:0000256" key="3">
    <source>
        <dbReference type="SAM" id="MobiDB-lite"/>
    </source>
</evidence>
<evidence type="ECO:0000269" key="4">
    <source>
    </source>
</evidence>
<evidence type="ECO:0000269" key="5">
    <source>
    </source>
</evidence>
<evidence type="ECO:0000269" key="6">
    <source>
    </source>
</evidence>
<evidence type="ECO:0000269" key="7">
    <source>
    </source>
</evidence>
<evidence type="ECO:0000269" key="8">
    <source>
    </source>
</evidence>
<evidence type="ECO:0000269" key="9">
    <source>
    </source>
</evidence>
<evidence type="ECO:0000269" key="10">
    <source>
    </source>
</evidence>
<evidence type="ECO:0000269" key="11">
    <source>
    </source>
</evidence>
<evidence type="ECO:0000269" key="12">
    <source>
    </source>
</evidence>
<evidence type="ECO:0000269" key="13">
    <source>
    </source>
</evidence>
<evidence type="ECO:0000269" key="14">
    <source>
    </source>
</evidence>
<evidence type="ECO:0000269" key="15">
    <source>
    </source>
</evidence>
<evidence type="ECO:0000269" key="16">
    <source>
    </source>
</evidence>
<evidence type="ECO:0000269" key="17">
    <source>
    </source>
</evidence>
<evidence type="ECO:0000269" key="18">
    <source>
    </source>
</evidence>
<evidence type="ECO:0000269" key="19">
    <source>
    </source>
</evidence>
<evidence type="ECO:0000269" key="20">
    <source>
    </source>
</evidence>
<evidence type="ECO:0000269" key="21">
    <source>
    </source>
</evidence>
<evidence type="ECO:0000269" key="22">
    <source>
    </source>
</evidence>
<evidence type="ECO:0000269" key="23">
    <source>
    </source>
</evidence>
<evidence type="ECO:0000269" key="24">
    <source>
    </source>
</evidence>
<evidence type="ECO:0000269" key="25">
    <source>
    </source>
</evidence>
<evidence type="ECO:0000269" key="26">
    <source>
    </source>
</evidence>
<evidence type="ECO:0000269" key="27">
    <source>
    </source>
</evidence>
<evidence type="ECO:0000269" key="28">
    <source>
    </source>
</evidence>
<evidence type="ECO:0000269" key="29">
    <source>
    </source>
</evidence>
<evidence type="ECO:0000269" key="30">
    <source>
    </source>
</evidence>
<evidence type="ECO:0000269" key="31">
    <source>
    </source>
</evidence>
<evidence type="ECO:0000269" key="32">
    <source>
    </source>
</evidence>
<evidence type="ECO:0000269" key="33">
    <source>
    </source>
</evidence>
<evidence type="ECO:0000269" key="34">
    <source>
    </source>
</evidence>
<evidence type="ECO:0000269" key="35">
    <source>
    </source>
</evidence>
<evidence type="ECO:0000269" key="36">
    <source>
    </source>
</evidence>
<evidence type="ECO:0000269" key="37">
    <source>
    </source>
</evidence>
<evidence type="ECO:0000269" key="38">
    <source>
    </source>
</evidence>
<evidence type="ECO:0000269" key="39">
    <source>
    </source>
</evidence>
<evidence type="ECO:0000269" key="40">
    <source>
    </source>
</evidence>
<evidence type="ECO:0000269" key="41">
    <source>
    </source>
</evidence>
<evidence type="ECO:0000269" key="42">
    <source>
    </source>
</evidence>
<evidence type="ECO:0000269" key="43">
    <source>
    </source>
</evidence>
<evidence type="ECO:0000269" key="44">
    <source>
    </source>
</evidence>
<evidence type="ECO:0000269" key="45">
    <source>
    </source>
</evidence>
<evidence type="ECO:0000269" key="46">
    <source>
    </source>
</evidence>
<evidence type="ECO:0000269" key="47">
    <source>
    </source>
</evidence>
<evidence type="ECO:0000269" key="48">
    <source>
    </source>
</evidence>
<evidence type="ECO:0000269" key="49">
    <source>
    </source>
</evidence>
<evidence type="ECO:0000269" key="50">
    <source>
    </source>
</evidence>
<evidence type="ECO:0000269" key="51">
    <source>
    </source>
</evidence>
<evidence type="ECO:0000305" key="52"/>
<evidence type="ECO:0000305" key="53">
    <source>
    </source>
</evidence>
<evidence type="ECO:0000305" key="54">
    <source>
    </source>
</evidence>
<evidence type="ECO:0000305" key="55">
    <source>
    </source>
</evidence>
<evidence type="ECO:0007829" key="56">
    <source>
        <dbReference type="PDB" id="1E1S"/>
    </source>
</evidence>
<evidence type="ECO:0007829" key="57">
    <source>
        <dbReference type="PDB" id="1E1U"/>
    </source>
</evidence>
<evidence type="ECO:0007829" key="58">
    <source>
        <dbReference type="PDB" id="1H0L"/>
    </source>
</evidence>
<evidence type="ECO:0007829" key="59">
    <source>
        <dbReference type="PDB" id="1OEH"/>
    </source>
</evidence>
<evidence type="ECO:0007829" key="60">
    <source>
        <dbReference type="PDB" id="1OEI"/>
    </source>
</evidence>
<evidence type="ECO:0007829" key="61">
    <source>
        <dbReference type="PDB" id="1QM0"/>
    </source>
</evidence>
<evidence type="ECO:0007829" key="62">
    <source>
        <dbReference type="PDB" id="2LFT"/>
    </source>
</evidence>
<evidence type="ECO:0007829" key="63">
    <source>
        <dbReference type="PDB" id="3HAK"/>
    </source>
</evidence>
<evidence type="ECO:0007829" key="64">
    <source>
        <dbReference type="PDB" id="3HER"/>
    </source>
</evidence>
<evidence type="ECO:0007829" key="65">
    <source>
        <dbReference type="PDB" id="3MD4"/>
    </source>
</evidence>
<evidence type="ECO:0007829" key="66">
    <source>
        <dbReference type="PDB" id="4E1H"/>
    </source>
</evidence>
<evidence type="ECO:0007829" key="67">
    <source>
        <dbReference type="PDB" id="4KML"/>
    </source>
</evidence>
<evidence type="ECO:0007829" key="68">
    <source>
        <dbReference type="PDB" id="5L6R"/>
    </source>
</evidence>
<evidence type="ECO:0007829" key="69">
    <source>
        <dbReference type="PDB" id="5YJ4"/>
    </source>
</evidence>
<evidence type="ECO:0007829" key="70">
    <source>
        <dbReference type="PDB" id="6LNI"/>
    </source>
</evidence>
<evidence type="ECO:0007829" key="71">
    <source>
        <dbReference type="PDB" id="7RL4"/>
    </source>
</evidence>
<organism>
    <name type="scientific">Homo sapiens</name>
    <name type="common">Human</name>
    <dbReference type="NCBI Taxonomy" id="9606"/>
    <lineage>
        <taxon>Eukaryota</taxon>
        <taxon>Metazoa</taxon>
        <taxon>Chordata</taxon>
        <taxon>Craniata</taxon>
        <taxon>Vertebrata</taxon>
        <taxon>Euteleostomi</taxon>
        <taxon>Mammalia</taxon>
        <taxon>Eutheria</taxon>
        <taxon>Euarchontoglires</taxon>
        <taxon>Primates</taxon>
        <taxon>Haplorrhini</taxon>
        <taxon>Catarrhini</taxon>
        <taxon>Hominidae</taxon>
        <taxon>Homo</taxon>
    </lineage>
</organism>
<name>PRIO_HUMAN</name>
<reference key="1">
    <citation type="journal article" date="1986" name="DNA">
        <title>Molecular cloning of a human prion protein cDNA.</title>
        <authorList>
            <person name="Kretzschmar H.A."/>
            <person name="Stowring L.E."/>
            <person name="Westaway D."/>
            <person name="Stubblebine W.H."/>
            <person name="Prusiner S.B."/>
            <person name="Dearmond S.J."/>
        </authorList>
    </citation>
    <scope>NUCLEOTIDE SEQUENCE [MRNA]</scope>
</reference>
<reference key="2">
    <citation type="journal article" date="1991" name="Am. J. Hum. Genet.">
        <title>Genomic structure of the human prion protein gene.</title>
        <authorList>
            <person name="Puckett C."/>
            <person name="Concannon P."/>
            <person name="Casey C."/>
            <person name="Hood L.E."/>
        </authorList>
    </citation>
    <scope>NUCLEOTIDE SEQUENCE [GENOMIC DNA]</scope>
    <scope>VARIANT 56-GLY--GLY-63 DEL</scope>
    <source>
        <tissue>Brain</tissue>
    </source>
</reference>
<reference key="3">
    <citation type="journal article" date="1998" name="Genome Res.">
        <title>Complete genomic sequence and analysis of the prion protein gene region from three mammalian species.</title>
        <authorList>
            <person name="Lee I.Y."/>
            <person name="Westaway D."/>
            <person name="Smit A.F.A."/>
            <person name="Wang K."/>
            <person name="Seto J."/>
            <person name="Chen L."/>
            <person name="Acharya C."/>
            <person name="Ankener M."/>
            <person name="Baskin D."/>
            <person name="Cooper C."/>
            <person name="Yao H."/>
            <person name="Prusiner S.B."/>
            <person name="Hood L.E."/>
        </authorList>
    </citation>
    <scope>NUCLEOTIDE SEQUENCE [GENOMIC DNA]</scope>
</reference>
<reference key="4">
    <citation type="journal article" date="1999" name="Am. J. Med. Genet.">
        <title>Novel PRNP sequence variant associated with familial encephalopathy.</title>
        <authorList>
            <person name="Cervenakova L."/>
            <person name="Buetefisch C."/>
            <person name="Lee H.S."/>
            <person name="Taller I."/>
            <person name="Stone G."/>
            <person name="Gibbs C.J. Jr."/>
            <person name="Brown P."/>
            <person name="Hallett M."/>
            <person name="Goldfarb L.G."/>
        </authorList>
    </citation>
    <scope>NUCLEOTIDE SEQUENCE [GENOMIC DNA]</scope>
    <scope>VARIANT GSD ARG-187</scope>
    <source>
        <tissue>Blood</tissue>
    </source>
</reference>
<reference key="5">
    <citation type="submission" date="2000-09" db="EMBL/GenBank/DDBJ databases">
        <title>Cloning of human prostate prion protein cDNA.</title>
        <authorList>
            <person name="Hryb D.J."/>
            <person name="Reynolds T.A."/>
            <person name="Nakhla A.M."/>
            <person name="Kahn S.M."/>
            <person name="Khan S.M."/>
            <person name="Romas N.A."/>
            <person name="Rosner W."/>
        </authorList>
    </citation>
    <scope>NUCLEOTIDE SEQUENCE [MRNA]</scope>
    <source>
        <tissue>Prostate</tissue>
    </source>
</reference>
<reference key="6">
    <citation type="submission" date="2006-02" db="EMBL/GenBank/DDBJ databases">
        <title>Analysis and comparison of several mammalian prion protein genes Prnp.</title>
        <authorList>
            <person name="Zhang J."/>
            <person name="Liu Y."/>
            <person name="Chen H."/>
            <person name="Jiang H."/>
            <person name="Lu W."/>
            <person name="Zhu X."/>
            <person name="Xie Q."/>
            <person name="Cai X."/>
            <person name="Liu X."/>
        </authorList>
    </citation>
    <scope>NUCLEOTIDE SEQUENCE [GENOMIC DNA]</scope>
</reference>
<reference key="7">
    <citation type="journal article" date="2001" name="Nature">
        <title>The DNA sequence and comparative analysis of human chromosome 20.</title>
        <authorList>
            <person name="Deloukas P."/>
            <person name="Matthews L.H."/>
            <person name="Ashurst J.L."/>
            <person name="Burton J."/>
            <person name="Gilbert J.G.R."/>
            <person name="Jones M."/>
            <person name="Stavrides G."/>
            <person name="Almeida J.P."/>
            <person name="Babbage A.K."/>
            <person name="Bagguley C.L."/>
            <person name="Bailey J."/>
            <person name="Barlow K.F."/>
            <person name="Bates K.N."/>
            <person name="Beard L.M."/>
            <person name="Beare D.M."/>
            <person name="Beasley O.P."/>
            <person name="Bird C.P."/>
            <person name="Blakey S.E."/>
            <person name="Bridgeman A.M."/>
            <person name="Brown A.J."/>
            <person name="Buck D."/>
            <person name="Burrill W.D."/>
            <person name="Butler A.P."/>
            <person name="Carder C."/>
            <person name="Carter N.P."/>
            <person name="Chapman J.C."/>
            <person name="Clamp M."/>
            <person name="Clark G."/>
            <person name="Clark L.N."/>
            <person name="Clark S.Y."/>
            <person name="Clee C.M."/>
            <person name="Clegg S."/>
            <person name="Cobley V.E."/>
            <person name="Collier R.E."/>
            <person name="Connor R.E."/>
            <person name="Corby N.R."/>
            <person name="Coulson A."/>
            <person name="Coville G.J."/>
            <person name="Deadman R."/>
            <person name="Dhami P.D."/>
            <person name="Dunn M."/>
            <person name="Ellington A.G."/>
            <person name="Frankland J.A."/>
            <person name="Fraser A."/>
            <person name="French L."/>
            <person name="Garner P."/>
            <person name="Grafham D.V."/>
            <person name="Griffiths C."/>
            <person name="Griffiths M.N.D."/>
            <person name="Gwilliam R."/>
            <person name="Hall R.E."/>
            <person name="Hammond S."/>
            <person name="Harley J.L."/>
            <person name="Heath P.D."/>
            <person name="Ho S."/>
            <person name="Holden J.L."/>
            <person name="Howden P.J."/>
            <person name="Huckle E."/>
            <person name="Hunt A.R."/>
            <person name="Hunt S.E."/>
            <person name="Jekosch K."/>
            <person name="Johnson C.M."/>
            <person name="Johnson D."/>
            <person name="Kay M.P."/>
            <person name="Kimberley A.M."/>
            <person name="King A."/>
            <person name="Knights A."/>
            <person name="Laird G.K."/>
            <person name="Lawlor S."/>
            <person name="Lehvaeslaiho M.H."/>
            <person name="Leversha M.A."/>
            <person name="Lloyd C."/>
            <person name="Lloyd D.M."/>
            <person name="Lovell J.D."/>
            <person name="Marsh V.L."/>
            <person name="Martin S.L."/>
            <person name="McConnachie L.J."/>
            <person name="McLay K."/>
            <person name="McMurray A.A."/>
            <person name="Milne S.A."/>
            <person name="Mistry D."/>
            <person name="Moore M.J.F."/>
            <person name="Mullikin J.C."/>
            <person name="Nickerson T."/>
            <person name="Oliver K."/>
            <person name="Parker A."/>
            <person name="Patel R."/>
            <person name="Pearce T.A.V."/>
            <person name="Peck A.I."/>
            <person name="Phillimore B.J.C.T."/>
            <person name="Prathalingam S.R."/>
            <person name="Plumb R.W."/>
            <person name="Ramsay H."/>
            <person name="Rice C.M."/>
            <person name="Ross M.T."/>
            <person name="Scott C.E."/>
            <person name="Sehra H.K."/>
            <person name="Shownkeen R."/>
            <person name="Sims S."/>
            <person name="Skuce C.D."/>
            <person name="Smith M.L."/>
            <person name="Soderlund C."/>
            <person name="Steward C.A."/>
            <person name="Sulston J.E."/>
            <person name="Swann R.M."/>
            <person name="Sycamore N."/>
            <person name="Taylor R."/>
            <person name="Tee L."/>
            <person name="Thomas D.W."/>
            <person name="Thorpe A."/>
            <person name="Tracey A."/>
            <person name="Tromans A.C."/>
            <person name="Vaudin M."/>
            <person name="Wall M."/>
            <person name="Wallis J.M."/>
            <person name="Whitehead S.L."/>
            <person name="Whittaker P."/>
            <person name="Willey D.L."/>
            <person name="Williams L."/>
            <person name="Williams S.A."/>
            <person name="Wilming L."/>
            <person name="Wray P.W."/>
            <person name="Hubbard T."/>
            <person name="Durbin R.M."/>
            <person name="Bentley D.R."/>
            <person name="Beck S."/>
            <person name="Rogers J."/>
        </authorList>
    </citation>
    <scope>NUCLEOTIDE SEQUENCE [LARGE SCALE GENOMIC DNA]</scope>
</reference>
<reference key="8">
    <citation type="journal article" date="2004" name="Genome Res.">
        <title>The status, quality, and expansion of the NIH full-length cDNA project: the Mammalian Gene Collection (MGC).</title>
        <authorList>
            <consortium name="The MGC Project Team"/>
        </authorList>
    </citation>
    <scope>NUCLEOTIDE SEQUENCE [LARGE SCALE MRNA]</scope>
    <source>
        <tissue>Brain</tissue>
        <tissue>Ovary</tissue>
    </source>
</reference>
<reference key="9">
    <citation type="journal article" date="1986" name="Science">
        <title>Human prion protein cDNA: molecular cloning, chromosomal mapping, and biological implications.</title>
        <authorList>
            <person name="Liao Y.-C.J."/>
            <person name="Lebo R.V."/>
            <person name="Clawson G.A."/>
            <person name="Smuckler E.A."/>
        </authorList>
    </citation>
    <scope>NUCLEOTIDE SEQUENCE [MRNA] OF 8-253</scope>
</reference>
<reference key="10">
    <citation type="journal article" date="1992" name="Hum. Mol. Genet.">
        <title>Deletion in the prion protein gene in a demented patient.</title>
        <authorList>
            <person name="Diedrich J.F."/>
            <person name="Knopman D.S."/>
            <person name="List J.F."/>
            <person name="Olson K."/>
            <person name="Frey W.H."/>
            <person name="Emory C.R."/>
            <person name="Sung J.H."/>
            <person name="Haase A.T."/>
        </authorList>
    </citation>
    <scope>NUCLEOTIDE SEQUENCE [GENOMIC DNA] OF 9-232</scope>
    <scope>VARIANT 56-GLY--GLY-63 DEL</scope>
    <source>
        <tissue>Brain</tissue>
    </source>
</reference>
<reference key="11">
    <citation type="journal article" date="1997" name="Nature">
        <title>A prion-linked psychiatric disorder.</title>
        <authorList>
            <person name="Samaia H.B."/>
            <person name="Mari J.J."/>
            <person name="Vallada H.P."/>
            <person name="Moura R.P."/>
            <person name="Simpson A.J.G."/>
            <person name="Brentani R.R."/>
        </authorList>
    </citation>
    <scope>NUCLEOTIDE SEQUENCE [GENOMIC DNA] OF 8-253</scope>
    <scope>VARIANT SCHIZOAFFECTIVE DISORDER SER-171</scope>
</reference>
<reference key="12">
    <citation type="journal article" date="1995" name="Am. J. Med. Genet.">
        <title>SSCP analysis and sequencing of the human prion protein gene (PRNP) detects two different 24 bp deletions in an atypical Alzheimer's disease family.</title>
        <authorList>
            <person name="Perry R.T."/>
            <person name="Go R.C."/>
            <person name="Harrell L.E."/>
            <person name="Acton R.T."/>
        </authorList>
    </citation>
    <scope>NUCLEOTIDE SEQUENCE [GENOMIC DNA] OF 41-85</scope>
    <scope>VARIANT 56-GLY--GLY-63 DEL</scope>
</reference>
<reference key="13">
    <citation type="journal article" date="1991" name="EMBO J.">
        <title>Amyloid protein of Gerstmann-Straussler-Scheinker disease (Indiana kindred) is an 11 kd fragment of prion protein with an N-terminal glycine at codon 58.</title>
        <authorList>
            <person name="Tagliavini F."/>
            <person name="Prelli F."/>
            <person name="Ghiso J."/>
            <person name="Bugiani O."/>
            <person name="Serban D."/>
            <person name="Prusiner S.B."/>
            <person name="Farlow M.R."/>
            <person name="Ghetti B."/>
            <person name="Frangione B."/>
        </authorList>
    </citation>
    <scope>PROTEIN SEQUENCE OF 58-85 AND 111-150</scope>
</reference>
<reference key="14">
    <citation type="journal article" date="1991" name="Proc. Natl. Acad. Sci. U.S.A.">
        <title>Transmissible familial Creutzfeldt-Jakob disease associated with five, seven, and eight extra octapeptide coding repeats in the PRNP gene.</title>
        <authorList>
            <person name="Goldfarb L.G."/>
            <person name="Brown P."/>
            <person name="McCombie W.R."/>
            <person name="Goldgaber D."/>
            <person name="Swergold G.D."/>
            <person name="Wills P.R."/>
            <person name="Cervenakova L."/>
            <person name="Baron H."/>
            <person name="Gibbs C.J. Jr."/>
            <person name="Gajdusek D.C."/>
        </authorList>
    </citation>
    <scope>NUCLEOTIDE SEQUENCE [GENOMIC DNA] OF 84-91</scope>
</reference>
<reference key="15">
    <citation type="journal article" date="1998" name="Am. J. Hum. Genet.">
        <title>A Huntington disease-like neurodegenerative disorder maps to chromosome 20p.</title>
        <authorList>
            <person name="Xiang F."/>
            <person name="Almqvist E.W."/>
            <person name="Huq M."/>
            <person name="Lundin A."/>
            <person name="Hayden M.R."/>
            <person name="Edstroem L."/>
            <person name="Anvret M."/>
            <person name="Zhang Z."/>
        </authorList>
    </citation>
    <scope>INVOLVEMENT IN HDL1</scope>
</reference>
<reference key="16">
    <citation type="journal article" date="2003" name="J. Biol. Chem.">
        <title>Prion, amyloid beta-derived Cu(II) ions, or free Zn(II) ions support S-nitroso-dependent autocleavage of glypican-1 heparan sulfate.</title>
        <authorList>
            <person name="Mani K."/>
            <person name="Cheng F."/>
            <person name="Havsmark B."/>
            <person name="Jonsson M."/>
            <person name="Belting M."/>
            <person name="Fransson L.A."/>
        </authorList>
    </citation>
    <scope>COPPER-BINDING</scope>
    <scope>FUNCTION</scope>
</reference>
<reference key="17">
    <citation type="journal article" date="2000" name="J. Alzheimers Dis.">
        <title>The Thr183Ala mutation, not the loss of the first glycosylation site, alters the physical properties of the prion protein.</title>
        <authorList>
            <person name="Capellari S."/>
            <person name="Zaidi S.I."/>
            <person name="Long A.C."/>
            <person name="Kwon E.E."/>
            <person name="Petersen R.B."/>
        </authorList>
    </citation>
    <scope>GLYCOSYLATION AT ASN-181</scope>
    <scope>VARIANT SENF ALA-183</scope>
    <scope>CHARACTERIZATION OF VARIANT SENF ALA-183</scope>
</reference>
<reference key="18">
    <citation type="journal article" date="2005" name="J. Am. Chem. Soc.">
        <title>The octarepeat domain of the prion protein binds Cu(II) with three distinct coordination modes at pH 7.4.</title>
        <authorList>
            <person name="Chattopadhyay M."/>
            <person name="Walter E.D."/>
            <person name="Newell D.J."/>
            <person name="Jackson P.J."/>
            <person name="Aronoff-Spencer E."/>
            <person name="Peisach J."/>
            <person name="Gerfen G.J."/>
            <person name="Bennett B."/>
            <person name="Antholine W.E."/>
            <person name="Millhauser G.L."/>
        </authorList>
    </citation>
    <scope>COPPER-BINDING</scope>
</reference>
<reference key="19">
    <citation type="journal article" date="2007" name="J. Am. Chem. Soc.">
        <title>The prion protein is a combined zinc and copper binding protein: Zn2+ alters the distribution of Cu2+ coordination modes.</title>
        <authorList>
            <person name="Walter E.D."/>
            <person name="Stevens D.J."/>
            <person name="Visconte M.P."/>
            <person name="Millhauser G.L."/>
        </authorList>
    </citation>
    <scope>COPPER-BINDING</scope>
    <scope>ZINC-BINDING</scope>
</reference>
<reference key="20">
    <citation type="journal article" date="2009" name="J. Biol. Chem.">
        <title>Biosynthesis of prion protein nucleocytoplasmic isoforms by alternative initiation of translation.</title>
        <authorList>
            <person name="Juanes M.E."/>
            <person name="Elvira G."/>
            <person name="Garcia-Grande A."/>
            <person name="Calero M."/>
            <person name="Gasset M."/>
        </authorList>
    </citation>
    <scope>RETRACTED PAPER</scope>
</reference>
<reference key="21">
    <citation type="journal article" date="2017" name="J. Biol. Chem.">
        <title>Biosynthesis of prion protein nucleocytoplasmic isoforms by alternative initiation of translation.</title>
        <authorList>
            <person name="Juanes M.E."/>
            <person name="Elvira G."/>
            <person name="Garcia-Grande A."/>
            <person name="Calero M."/>
            <person name="Gasset M."/>
        </authorList>
    </citation>
    <scope>RETRACTION NOTICE OF PUBMED:19059915</scope>
</reference>
<reference key="22">
    <citation type="journal article" date="2009" name="Nat. Biotechnol.">
        <title>Mass-spectrometric identification and relative quantification of N-linked cell surface glycoproteins.</title>
        <authorList>
            <person name="Wollscheid B."/>
            <person name="Bausch-Fluck D."/>
            <person name="Henderson C."/>
            <person name="O'Brien R."/>
            <person name="Bibel M."/>
            <person name="Schiess R."/>
            <person name="Aebersold R."/>
            <person name="Watts J.D."/>
        </authorList>
    </citation>
    <scope>GLYCOSYLATION [LARGE SCALE ANALYSIS] AT ASN-197</scope>
    <source>
        <tissue>Leukemic T-cell</tissue>
    </source>
</reference>
<reference key="23">
    <citation type="journal article" date="2009" name="PLoS Pathog.">
        <title>Glypican-1 mediates both prion protein lipid raft association and disease isoform formation.</title>
        <authorList>
            <person name="Taylor D.R."/>
            <person name="Whitehouse I.J."/>
            <person name="Hooper N.M."/>
        </authorList>
    </citation>
    <scope>FUNCTION</scope>
    <scope>SUBCELLULAR LOCATION</scope>
    <scope>DISEASE ASSOCIATION</scope>
</reference>
<reference key="24">
    <citation type="journal article" date="2009" name="PLoS Pathog.">
        <title>Early onset prion disease from octarepeat expansion correlates with copper or zinc binding properties.</title>
        <authorList>
            <person name="Stevens D.J."/>
            <person name="Walter E.D."/>
            <person name="Rodriguez A."/>
            <person name="Draper D."/>
            <person name="Davies P."/>
            <person name="Brown D.R."/>
            <person name="Millhauser G.L."/>
        </authorList>
    </citation>
    <scope>COPPER-BINDING</scope>
</reference>
<reference key="25">
    <citation type="journal article" date="2010" name="J. Biol. Chem.">
        <title>Prion fibrillization is mediated by a native structural element that comprises helices H2 and H3.</title>
        <authorList>
            <person name="Adrover M."/>
            <person name="Pauwels K."/>
            <person name="Prigent S."/>
            <person name="de Chiara C."/>
            <person name="Xu Z."/>
            <person name="Chapuis C."/>
            <person name="Pastore A."/>
            <person name="Rezaei H."/>
        </authorList>
    </citation>
    <scope>SUBUNIT</scope>
    <scope>DOMAIN</scope>
</reference>
<reference key="26">
    <citation type="journal article" date="2010" name="J. Cell. Biochem.">
        <title>Copper (II) promotes the formation of soluble neurotoxic PrP oligomers in acidic environment.</title>
        <authorList>
            <person name="Wu D."/>
            <person name="Zhang W."/>
            <person name="Luo Q."/>
            <person name="Luo K."/>
            <person name="Huang L."/>
            <person name="Wang W."/>
            <person name="Huang T."/>
            <person name="Chen R."/>
            <person name="Lin Y."/>
            <person name="Pang D."/>
            <person name="Xiao G."/>
        </authorList>
    </citation>
    <scope>COPPER-BINDING</scope>
    <scope>CIRCULAR DICHROISM</scope>
    <scope>DOMAIN</scope>
    <scope>FUNCTION</scope>
    <scope>SUBUNIT</scope>
</reference>
<reference key="27">
    <citation type="journal article" date="2011" name="FASEB J.">
        <title>An overlapping reading frame in the PRNP gene encodes a novel polypeptide distinct from the prion protein.</title>
        <authorList>
            <person name="Vanderperre B."/>
            <person name="Staskevicius A.B."/>
            <person name="Tremblay G."/>
            <person name="McCoy M."/>
            <person name="O'Neill M.A."/>
            <person name="Cashman N.R."/>
            <person name="Roucou X."/>
        </authorList>
    </citation>
    <scope>BICISTRONIC GENE</scope>
</reference>
<reference key="28">
    <citation type="journal article" date="2011" name="Mol. Cell. Biochem.">
        <title>Characterizing the novel protein p33MONOX.</title>
        <authorList>
            <person name="Mishra M."/>
            <person name="Inoue N."/>
            <person name="Heese K."/>
        </authorList>
    </citation>
    <scope>INTERACTION WITH KIAA1191</scope>
</reference>
<reference key="29">
    <citation type="journal article" date="2000" name="J. Biol. Chem.">
        <title>Solution structure of the E200K variant of human prion protein. Implications for the mechanism of pathogenesis in familial prion diseases.</title>
        <authorList>
            <person name="Zhang Y."/>
            <person name="Swietnicki W."/>
            <person name="Zagorski M.G."/>
            <person name="Surewicz W.K."/>
            <person name="Soennichsen F.D."/>
        </authorList>
    </citation>
    <scope>STRUCTURE BY NMR OF 90-231 OF MUTANT LYS-200</scope>
</reference>
<reference key="30">
    <citation type="journal article" date="2000" name="Proc. Natl. Acad. Sci. U.S.A.">
        <title>NMR solution structure of the human prion protein.</title>
        <authorList>
            <person name="Zahn R."/>
            <person name="Liu A."/>
            <person name="Luhrs T."/>
            <person name="Riek R."/>
            <person name="von Schroetter C."/>
            <person name="Lopez Garcia F."/>
            <person name="Billeter M."/>
            <person name="Calzolai L."/>
            <person name="Wider G."/>
            <person name="Wuethrich K."/>
        </authorList>
    </citation>
    <scope>STRUCTURE BY NMR OF 23-230</scope>
</reference>
<reference key="31">
    <citation type="journal article" date="2000" name="Proc. Natl. Acad. Sci. U.S.A.">
        <title>NMR structures of three single-residue variants of the human prion protein.</title>
        <authorList>
            <person name="Calzolai L."/>
            <person name="Lysek D.A."/>
            <person name="Guntert P."/>
            <person name="von Schroetter C."/>
            <person name="Riek R."/>
            <person name="Zahn R."/>
            <person name="Wuethrich K."/>
        </authorList>
    </citation>
    <scope>STRUCTURE BY NMR OF 118-221</scope>
</reference>
<reference key="32">
    <citation type="journal article" date="2001" name="Nat. Struct. Biol.">
        <title>Crystal structure of the human prion protein reveals a mechanism for oligomerization.</title>
        <authorList>
            <person name="Knaus K.J."/>
            <person name="Morillas M."/>
            <person name="Swietnicki W."/>
            <person name="Malone M."/>
            <person name="Surewicz W.K."/>
            <person name="Yee V.C."/>
        </authorList>
    </citation>
    <scope>X-RAY CRYSTALLOGRAPHY (2.0 ANGSTROMS) OF 119-226</scope>
    <scope>DOMAIN</scope>
    <scope>SUBUNIT</scope>
</reference>
<reference key="33">
    <citation type="journal article" date="2002" name="Biochemistry">
        <title>Molecular features of the copper binding sites in the octarepeat domain of the prion protein.</title>
        <authorList>
            <person name="Burns C.S."/>
            <person name="Aronoff-Spencer E."/>
            <person name="Dunham C.M."/>
            <person name="Lario P."/>
            <person name="Avdievich N.I."/>
            <person name="Antholine W.E."/>
            <person name="Olmstead M.M."/>
            <person name="Vrielink A."/>
            <person name="Gerfen G.J."/>
            <person name="Peisach J."/>
            <person name="Scott W.G."/>
            <person name="Millhauser G.L."/>
        </authorList>
    </citation>
    <scope>X-RAY CRYSTALLOGRAPHY (0.75 ANGSTROMS) OF 61-65 IN COMPLEX WITH COPPER ION</scope>
    <scope>DOMAIN</scope>
    <scope>SUBUNIT</scope>
</reference>
<reference key="34">
    <citation type="journal article" date="2003" name="J. Mol. Biol.">
        <title>The octapeptide repeats in mammalian prion protein constitute a pH-dependent folding and aggregation site.</title>
        <authorList>
            <person name="Zahn R."/>
        </authorList>
    </citation>
    <scope>STRUCTURE BY NMR OF 61-68</scope>
    <scope>DISULFIDE BOND</scope>
    <scope>SUBUNIT</scope>
</reference>
<reference key="35">
    <citation type="journal article" date="1993" name="Hum. Mutat.">
        <title>Mutations and polymorphisms in the prion protein gene.</title>
        <authorList>
            <person name="Palmer M.S."/>
            <person name="Collinge J."/>
        </authorList>
    </citation>
    <scope>REVIEW ON VARIANTS</scope>
</reference>
<reference key="36">
    <citation type="journal article" date="1993" name="Arch. Neurol.">
        <title>Genetic and infectious prion diseases.</title>
        <authorList>
            <person name="Prusiner S.B."/>
        </authorList>
    </citation>
    <scope>REVIEW ON VARIANTS</scope>
    <scope>INVOLVEMENT IN PRION DISEASES</scope>
</reference>
<reference key="37">
    <citation type="journal article" date="2007" name="Nature">
        <title>Atomic structures of amyloid cross-beta spines reveal varied steric zippers.</title>
        <authorList>
            <person name="Sawaya M.R."/>
            <person name="Sambashivan S."/>
            <person name="Nelson R."/>
            <person name="Ivanova M.I."/>
            <person name="Sievers S.A."/>
            <person name="Apostol M.I."/>
            <person name="Thompson M.J."/>
            <person name="Balbirnie M."/>
            <person name="Wiltzius J.J."/>
            <person name="McFarlane H.T."/>
            <person name="Madsen A.O."/>
            <person name="Riekel C."/>
            <person name="Eisenberg D."/>
        </authorList>
    </citation>
    <scope>X-RAY CRYSTALLOGRAPHY (0.85 ANGSTROMS) OF 170-175</scope>
    <scope>SUBUNIT</scope>
    <scope>DOMAIN</scope>
</reference>
<reference key="38">
    <citation type="journal article" date="2009" name="Proc. Natl. Acad. Sci. U.S.A.">
        <title>Crystal structure of human prion protein bound to a therapeutic antibody.</title>
        <authorList>
            <person name="Antonyuk S.V."/>
            <person name="Trevitt C.R."/>
            <person name="Strange R.W."/>
            <person name="Jackson G.S."/>
            <person name="Sangar D."/>
            <person name="Batchelor M."/>
            <person name="Cooper S."/>
            <person name="Fraser C."/>
            <person name="Jones S."/>
            <person name="Georgiou T."/>
            <person name="Khalili-Shirazi A."/>
            <person name="Clarke A.R."/>
            <person name="Hasnain S.S."/>
            <person name="Collinge J."/>
        </authorList>
    </citation>
    <scope>X-RAY CRYSTALLOGRAPHY (2.9 ANGSTROMS) OF 119-231 IN COMPLEX WITH FAB FRAGMENT OF MONOCLONAL ANTIBODY ICSM 18</scope>
    <scope>SUBUNIT</scope>
</reference>
<reference key="39">
    <citation type="journal article" date="2010" name="EMBO J.">
        <title>Conformational diversity in prion protein variants influences intermolecular beta-sheet formation.</title>
        <authorList>
            <person name="Lee S."/>
            <person name="Antony L."/>
            <person name="Hartmann R."/>
            <person name="Knaus K.J."/>
            <person name="Surewicz K."/>
            <person name="Surewicz W.K."/>
            <person name="Yee V.C."/>
        </authorList>
    </citation>
    <scope>X-RAY CRYSTALLOGRAPHY (1.8 ANGSTROMS) OF 125-227 OF VARIANT VAL-129</scope>
    <scope>VARIANT VAL-129</scope>
    <scope>VARIANT CJD ASN-178</scope>
    <scope>VARIANT FFI ASN-178</scope>
    <scope>VARIANT GSD SER-198</scope>
    <scope>SUBUNIT</scope>
    <scope>DOMAIN</scope>
</reference>
<reference key="40">
    <citation type="journal article" date="1989" name="Nature">
        <title>Linkage of a prion protein missense variant to Gerstmann-Straussler syndrome.</title>
        <authorList>
            <person name="Hsiao K."/>
            <person name="Baker H.F."/>
            <person name="Crow T.J."/>
            <person name="Poulter M."/>
            <person name="Owen F."/>
            <person name="Terwilliger J.D."/>
            <person name="Westaway D."/>
            <person name="Ott J."/>
            <person name="Pursiner S.B."/>
        </authorList>
    </citation>
    <scope>VARIANT GSD LEU-102</scope>
</reference>
<reference key="41">
    <citation type="journal article" date="1989" name="Biochem. Biophys. Res. Commun.">
        <title>Pro--&gt;Leu change at position 102 of prion protein is the most common but not the sole mutation related to Gerstmann-Straussler syndrome.</title>
        <authorList>
            <person name="Doh-Ura K."/>
            <person name="Tateishi J."/>
            <person name="Sasaki H."/>
            <person name="Kitamoto T."/>
            <person name="Sakaki Y."/>
        </authorList>
    </citation>
    <scope>VARIANTS LEU-102; VAL-117 AND VAL-129</scope>
</reference>
<reference key="42">
    <citation type="journal article" date="1992" name="Neurology">
        <title>Fatal familial insomnia: a second kindred with mutation of prion protein gene at codon 178.</title>
        <authorList>
            <person name="Medori R."/>
            <person name="Montagna P."/>
            <person name="Tritschler H.J."/>
            <person name="Leblanc A."/>
            <person name="Cortelli P."/>
            <person name="Tinuper P."/>
            <person name="Lugaresi E."/>
            <person name="Gambetti P."/>
        </authorList>
    </citation>
    <scope>VARIANT FFI ASN-178</scope>
</reference>
<reference key="43">
    <citation type="journal article" date="1991" name="Lancet">
        <title>New mutation in scrapie amyloid precursor gene (at codon 178) in Finnish Creutzfeldt-Jakob kindred.</title>
        <authorList>
            <person name="Goldfarb L.G."/>
            <person name="Haltia M."/>
            <person name="Brown P."/>
            <person name="Nieto A."/>
            <person name="Kovanen J."/>
            <person name="McCombie W.R."/>
            <person name="Trapp S."/>
            <person name="Gajdusek D.C."/>
        </authorList>
    </citation>
    <scope>VARIANT CJD ASN-178</scope>
</reference>
<reference key="44">
    <citation type="journal article" date="1990" name="Lancet">
        <title>Mutation in codon 200 of scrapie amyloid protein gene in two clusters of Creutzfeldt-Jakob disease in Slovakia.</title>
        <authorList>
            <person name="Goldfarb L."/>
            <person name="Mitrova E."/>
            <person name="Brown P."/>
            <person name="Toh B.K."/>
            <person name="Gajdusek D.C."/>
        </authorList>
    </citation>
    <scope>VARIANT CJD LYS-200</scope>
</reference>
<reference key="45">
    <citation type="journal article" date="1992" name="Nat. Genet.">
        <title>Mutant prion proteins in Gerstmann-Straussler-Scheinker disease with neurofibrillary tangles.</title>
        <authorList>
            <person name="Hsiao K."/>
            <person name="Dlouhy S.R."/>
            <person name="Farlow M.R."/>
            <person name="Cass C."/>
            <person name="da Costa M."/>
            <person name="Conneally P.M."/>
            <person name="Hodes M.E."/>
            <person name="Ghetti B."/>
            <person name="Prusiner S.B."/>
        </authorList>
    </citation>
    <scope>VARIANT GSD ARG-217</scope>
</reference>
<reference key="46">
    <citation type="journal article" date="1992" name="Science">
        <title>Fatal familial insomnia and familial Creutzfeldt-Jakob disease: disease phenotype determined by a DNA polymorphism.</title>
        <authorList>
            <person name="Goldfarb L.G."/>
            <person name="Petersen R.B."/>
            <person name="Tabaton M."/>
            <person name="Brown P."/>
            <person name="LeBlanc A.C."/>
            <person name="Montagna P."/>
            <person name="Cortelli P."/>
            <person name="Julien J."/>
            <person name="Vital C."/>
            <person name="Pendelbury W.W."/>
        </authorList>
    </citation>
    <scope>VARIANT VAL-129</scope>
    <scope>VARIANT CJD ASN-178</scope>
    <scope>VARIANT FFI ASN-178</scope>
    <scope>CHARACTERIZATION OF VARIANT VAL-129</scope>
    <scope>CHARACTERIZATION OF VARIANT CJD ASN-178</scope>
    <scope>CHARACTERIZATION OF VARIANT FFI ASN-178</scope>
    <scope>POLYMORPHISM</scope>
</reference>
<reference key="47">
    <citation type="journal article" date="1993" name="Biochem. Biophys. Res. Commun.">
        <title>Novel missense variants of prion protein in Creutzfeldt-Jakob disease or Gerstmann-Straussler syndrome.</title>
        <authorList>
            <person name="Kitamoto T."/>
            <person name="Ohta M."/>
            <person name="Doh-Ura K."/>
            <person name="Hitoshi S."/>
            <person name="Terao Y."/>
            <person name="Tateishi J."/>
        </authorList>
    </citation>
    <scope>VARIANTS CJD ILE-180 AND ARG-232</scope>
</reference>
<reference key="48">
    <citation type="journal article" date="1993" name="Ann. Neurol.">
        <title>A new point mutation of the prion protein gene in Creutzfeldt-Jakob disease.</title>
        <authorList>
            <person name="Pocchiari M."/>
            <person name="Salvatore M."/>
            <person name="Cutruzzola F."/>
            <person name="Genuardi M."/>
            <person name="Allcatelli C.T."/>
            <person name="Masullo C."/>
            <person name="Macchi G."/>
            <person name="Alema G."/>
            <person name="Galgani S."/>
            <person name="Xi Y.G."/>
            <person name="Petraroli R."/>
            <person name="Silvestrini M.C."/>
            <person name="Brunori M."/>
        </authorList>
    </citation>
    <scope>VARIANT CJD ILE-210</scope>
</reference>
<reference key="49">
    <citation type="journal article" date="1993" name="Neurology">
        <title>A missense mutation at codon 105 with codon 129 polymorphism of the prion protein gene in a new variant of Gerstmann-Straussler-Scheinker disease.</title>
        <authorList>
            <person name="Yamada M."/>
            <person name="Itoh Y."/>
            <person name="Fujigasaki H."/>
            <person name="Naruse S."/>
            <person name="Kaneko K."/>
            <person name="Kitamoto T."/>
            <person name="Tateishi J."/>
            <person name="Otomo E."/>
            <person name="Hayakawa M."/>
            <person name="Tanaka J."/>
            <person name="Matsushita M."/>
            <person name="Miyatake T."/>
        </authorList>
    </citation>
    <scope>VARIANT GSD LEU-105</scope>
</reference>
<reference key="50">
    <citation type="journal article" date="1994" name="J. Neurol. Sci.">
        <title>A variant of Gerstmann-Straussler-Scheinker disease carrying codon 105 mutation with codon 129 polymorphism of the prion protein gene: a clinicopathological study.</title>
        <authorList>
            <person name="Itoh Y."/>
            <person name="Yamada M."/>
            <person name="Hayakawa M."/>
            <person name="Shozawa T."/>
            <person name="Tanaka J."/>
            <person name="Matsushita M."/>
            <person name="Kitamoto T."/>
            <person name="Tateishi J."/>
            <person name="Otomo E."/>
        </authorList>
    </citation>
    <scope>VARIANT GSD LEU-105</scope>
</reference>
<reference key="51">
    <citation type="journal article" date="1994" name="Neurology">
        <title>Japanese family with Creutzfeldt-Jakob disease with codon 200 point mutation of the prion protein gene.</title>
        <authorList>
            <person name="Inoue I."/>
            <person name="Kitamoto T."/>
            <person name="Doh-Ura K."/>
            <person name="Shii H."/>
            <person name="Goto I."/>
            <person name="Tateishi J."/>
        </authorList>
    </citation>
    <scope>VARIANT CJD LYS-200</scope>
</reference>
<reference key="52">
    <citation type="journal article" date="1994" name="Philos. Trans. R. Soc. Lond., B, Biol. Sci.">
        <title>Mutation in codon 200 and polymorphism in codon 129 of the prion protein gene in Libyan Jews with Creutzfeldt-Jakob disease.</title>
        <authorList>
            <person name="Gabizon R."/>
            <person name="Rosenman H."/>
            <person name="Meiner Z."/>
            <person name="Kahana I."/>
            <person name="Kahana E."/>
            <person name="Shugart Y."/>
            <person name="Ott J."/>
            <person name="Prusiner S.B."/>
        </authorList>
    </citation>
    <scope>VARIANT CJD LYS-200</scope>
</reference>
<reference key="53">
    <citation type="journal article" date="1995" name="Neurology">
        <title>Gerstmann-Straussler-Scheinker disease with mutation at codon 102 and methionine at codon 129 of PRNP in previously unreported patients.</title>
        <authorList>
            <person name="Young K."/>
            <person name="Jones C.K."/>
            <person name="Piccardo P."/>
            <person name="Lazzarini A."/>
            <person name="Golbe L.I."/>
            <person name="Zimmerman T.R."/>
            <person name="Dickson D.W."/>
            <person name="McLachlan D.C."/>
            <person name="St George-Hyslop P.H."/>
            <person name="Lennox A."/>
        </authorList>
    </citation>
    <scope>VARIANT GSD LEU-102</scope>
</reference>
<reference key="54">
    <citation type="journal article" date="1996" name="Neurology">
        <title>Polymorphism at codon 129 or codon 219 of PRNP and clinical heterogeneity in a previously unreported family with Gerstmann-Straussler-Scheinker disease (PrP-P102L mutation).</title>
        <authorList>
            <person name="Barbanti P."/>
            <person name="Fabbrini G."/>
            <person name="Salvatore M."/>
            <person name="Petraroli R."/>
            <person name="Cardone F."/>
            <person name="Maras B."/>
            <person name="Equestre M."/>
            <person name="Macchi G."/>
            <person name="Lenzi G.L."/>
            <person name="Pocchiari M."/>
        </authorList>
    </citation>
    <scope>VARIANT GSD LEU-102</scope>
    <scope>VARIANT LYS-219</scope>
</reference>
<reference key="55">
    <citation type="journal article" date="1996" name="Neurology">
        <title>Mutation of the prion protein gene at codon 208 in familial Creutzfeldt-Jakob disease.</title>
        <authorList>
            <person name="Mastrianni J.A."/>
            <person name="Iannicola C."/>
            <person name="Myers R.M."/>
            <person name="Dearmond S."/>
            <person name="Prusiner S.B."/>
        </authorList>
    </citation>
    <scope>VARIANT CJD HIS-208</scope>
</reference>
<reference key="56">
    <citation type="journal article" date="1997" name="Ann. Neurol.">
        <title>Familial spongiform encephalopathy associated with a novel prion protein gene mutation.</title>
        <authorList>
            <person name="Nitrini R."/>
            <person name="Rosemberg S."/>
            <person name="Passos-Bueno M.R."/>
            <person name="da Silva L.S."/>
            <person name="Iughetti P."/>
            <person name="Papadopoulos M."/>
            <person name="Carrilho P.M."/>
            <person name="Caramelli P."/>
            <person name="Albrecht S."/>
            <person name="Zatz M."/>
            <person name="Leblanc A."/>
        </authorList>
    </citation>
    <scope>VARIANT SENF ALA-183</scope>
</reference>
<reference key="57">
    <citation type="journal article" date="1998" name="J. Neuropathol. Exp. Neurol.">
        <title>Phenotypic variability of Gerstmann-Straussler-Scheinker disease is associated with prion protein heterogeneity.</title>
        <authorList>
            <person name="Piccardo P."/>
            <person name="Dlouhy S.R."/>
            <person name="Lievens P.M."/>
            <person name="Young K."/>
            <person name="Bird T.D."/>
            <person name="Nochlin D."/>
            <person name="Dickson D.W."/>
            <person name="Vinters H.V."/>
            <person name="Zimmerman T.R."/>
            <person name="Mackenzie I.R."/>
            <person name="Kish S.J."/>
            <person name="Ang L.C."/>
            <person name="De Carli C."/>
            <person name="Pocchiari M."/>
            <person name="Brown P."/>
            <person name="Gibbs C.J. Jr."/>
            <person name="Gajdusek D.C."/>
            <person name="Bugiani O."/>
            <person name="Ironside J."/>
            <person name="Tagliavini F."/>
            <person name="Ghetti B."/>
        </authorList>
    </citation>
    <scope>VARIANTS GSD ASN-202 AND PRO-212</scope>
</reference>
<reference key="58">
    <citation type="journal article" date="1998" name="Lancet">
        <title>Protective prion protein polymorphisms against sporadic Creutzfeldt-Jakob disease.</title>
        <authorList>
            <person name="Shibuya S."/>
            <person name="Higuchi J."/>
            <person name="Shin R.W."/>
            <person name="Tateishi J."/>
            <person name="Kitamoto T."/>
        </authorList>
    </citation>
    <scope>VARIANT LYS-219</scope>
    <scope>CHARACTERIZATION OF VARIANT LYS-219</scope>
    <scope>POLYMORPHISM</scope>
</reference>
<reference key="59">
    <citation type="journal article" date="1999" name="Hum. Genet.">
        <title>Molecular genetics of human prion diseases in Germany.</title>
        <authorList>
            <person name="Windl O."/>
            <person name="Giese A."/>
            <person name="Schulz-Schaeffer W."/>
            <person name="Zerr I."/>
            <person name="Skworc K."/>
            <person name="Arendt S."/>
            <person name="Oberdieck C."/>
            <person name="Bodemer M."/>
            <person name="Poser S."/>
            <person name="Kretzschmar H.A."/>
        </authorList>
    </citation>
    <scope>VARIANTS ARG-188 AND SER-238</scope>
</reference>
<reference key="60">
    <citation type="journal article" date="2000" name="Am. J. Hum. Genet.">
        <title>High prevalence of pathogenic mutations in patients with early-onset dementia detected by sequence analyses of four different genes.</title>
        <authorList>
            <person name="Finckh U."/>
            <person name="Mueller-Thomsen T."/>
            <person name="Mann U."/>
            <person name="Eggers C."/>
            <person name="Marksteiner J."/>
            <person name="Meins W."/>
            <person name="Binetti G."/>
            <person name="Alberici A."/>
            <person name="Hock C."/>
            <person name="Nitsch R.M."/>
            <person name="Gal A."/>
        </authorList>
    </citation>
    <scope>VARIANTS EARLY-ONSET DEMENTIA LEU-102; ALA-183 AND LYS-188</scope>
</reference>
<reference key="61">
    <citation type="journal article" date="2000" name="Hum. Mutat.">
        <title>Identification of three novel mutations (E196K, V203I, E211Q) in the prion protein gene (PRNP) in inherited prion diseases with Creutzfeldt-Jakob disease phenotype.</title>
        <authorList>
            <person name="Peoc'h K."/>
            <person name="Manivet P."/>
            <person name="Beaudry P."/>
            <person name="Attane F."/>
            <person name="Besson G."/>
            <person name="Didier H."/>
            <person name="Delasnerie-Laupretre N."/>
            <person name="Laplanche J.-L."/>
        </authorList>
    </citation>
    <scope>VARIANTS CJD LYS-196; ILE-203 AND GLN-211</scope>
</reference>
<reference key="62">
    <citation type="journal article" date="2001" name="Arch. Neurol.">
        <title>A new PRNP mutation (G131V) associated with Gerstmann-Straussler-Scheinker disease.</title>
        <authorList>
            <person name="Panegyres P.K."/>
            <person name="Toufexis K."/>
            <person name="Kakulas B.A."/>
            <person name="Cernevakova L."/>
            <person name="Brown P."/>
            <person name="Ghetti B."/>
            <person name="Piccardo P."/>
            <person name="Dlouhy S.R."/>
        </authorList>
    </citation>
    <scope>VARIANT GSD VAL-131</scope>
</reference>
<reference key="63">
    <citation type="journal article" date="2003" name="Science">
        <title>Balancing selection at the prion protein gene consistent with prehistoric kurulike epidemics.</title>
        <authorList>
            <person name="Mead S."/>
            <person name="Stumpf M.P."/>
            <person name="Whitfield J."/>
            <person name="Beck J.A."/>
            <person name="Poulter M."/>
            <person name="Campbell T."/>
            <person name="Uphill J.B."/>
            <person name="Goldstein D."/>
            <person name="Alpers M."/>
            <person name="Fisher E.M."/>
            <person name="Collinge J."/>
        </authorList>
    </citation>
    <scope>VARIANT VAL-129</scope>
    <scope>CHARACTERIZATION OF VARIANT VAL-129</scope>
</reference>
<reference key="64">
    <citation type="journal article" date="2009" name="N. Engl. J. Med.">
        <title>A novel protective prion protein variant that colocalizes with kuru exposure.</title>
        <authorList>
            <person name="Mead S."/>
            <person name="Whitfield J."/>
            <person name="Poulter M."/>
            <person name="Shah P."/>
            <person name="Uphill J."/>
            <person name="Campbell T."/>
            <person name="Al-Dujaily H."/>
            <person name="Hummerich H."/>
            <person name="Beck J."/>
            <person name="Mein C.A."/>
            <person name="Verzilli C."/>
            <person name="Whittaker J."/>
            <person name="Alpers M.P."/>
            <person name="Collinge J."/>
        </authorList>
    </citation>
    <scope>VARIANT VAL-127</scope>
    <scope>INVOLVEMENT IN KURU</scope>
</reference>
<reference key="65">
    <citation type="journal article" date="2015" name="Nature">
        <title>A naturally occurring variant of the human prion protein completely prevents prion disease.</title>
        <authorList>
            <person name="Asante E.A."/>
            <person name="Smidak M."/>
            <person name="Grimshaw A."/>
            <person name="Houghton R."/>
            <person name="Tomlinson A."/>
            <person name="Jeelani A."/>
            <person name="Jakubcova T."/>
            <person name="Hamdan S."/>
            <person name="Richard-Londt A."/>
            <person name="Linehan J.M."/>
            <person name="Brandner S."/>
            <person name="Alpers M."/>
            <person name="Whitfield J."/>
            <person name="Mead S."/>
            <person name="Wadsworth J.D."/>
            <person name="Collinge J."/>
        </authorList>
    </citation>
    <scope>VARIANT VAL-127</scope>
    <scope>CHARACTERIZATION OF VARIANT VAL-127</scope>
    <scope>INVOLVEMENT IN KURU</scope>
    <scope>POLYMORPHISM</scope>
</reference>
<accession>P04156</accession>
<accession>O60489</accession>
<accession>P78446</accession>
<accession>Q15216</accession>
<accession>Q15221</accession>
<accession>Q27H91</accession>
<accession>Q5QPB4</accession>
<accession>Q8TBG0</accession>
<accession>Q96E70</accession>
<accession>Q9UP19</accession>
<dbReference type="EMBL" id="M13899">
    <property type="protein sequence ID" value="AAA60182.1"/>
    <property type="molecule type" value="mRNA"/>
</dbReference>
<dbReference type="EMBL" id="X83416">
    <property type="protein sequence ID" value="CAA58442.1"/>
    <property type="molecule type" value="Genomic_DNA"/>
</dbReference>
<dbReference type="EMBL" id="U29185">
    <property type="protein sequence ID" value="AAC78725.1"/>
    <property type="molecule type" value="Genomic_DNA"/>
</dbReference>
<dbReference type="EMBL" id="AF076976">
    <property type="protein sequence ID" value="AAD46098.1"/>
    <property type="molecule type" value="Genomic_DNA"/>
</dbReference>
<dbReference type="EMBL" id="AY008282">
    <property type="protein sequence ID" value="AAG21693.1"/>
    <property type="molecule type" value="mRNA"/>
</dbReference>
<dbReference type="EMBL" id="DQ408531">
    <property type="protein sequence ID" value="ABD63004.1"/>
    <property type="molecule type" value="Genomic_DNA"/>
</dbReference>
<dbReference type="EMBL" id="AL133396">
    <property type="status" value="NOT_ANNOTATED_CDS"/>
    <property type="molecule type" value="Genomic_DNA"/>
</dbReference>
<dbReference type="EMBL" id="BC012844">
    <property type="protein sequence ID" value="AAH12844.1"/>
    <property type="molecule type" value="mRNA"/>
</dbReference>
<dbReference type="EMBL" id="BC022532">
    <property type="protein sequence ID" value="AAH22532.1"/>
    <property type="molecule type" value="mRNA"/>
</dbReference>
<dbReference type="EMBL" id="D00015">
    <property type="protein sequence ID" value="BAA00011.1"/>
    <property type="molecule type" value="mRNA"/>
</dbReference>
<dbReference type="EMBL" id="M13667">
    <property type="protein sequence ID" value="AAA19664.1"/>
    <property type="molecule type" value="mRNA"/>
</dbReference>
<dbReference type="EMBL" id="M81929">
    <property type="protein sequence ID" value="AAB59442.1"/>
    <property type="molecule type" value="Genomic_DNA"/>
</dbReference>
<dbReference type="EMBL" id="M81930">
    <property type="protein sequence ID" value="AAB59443.1"/>
    <property type="molecule type" value="Genomic_DNA"/>
</dbReference>
<dbReference type="EMBL" id="AF030575">
    <property type="protein sequence ID" value="AAC05365.1"/>
    <property type="molecule type" value="Genomic_DNA"/>
</dbReference>
<dbReference type="EMBL" id="S80732">
    <property type="protein sequence ID" value="AAB50648.2"/>
    <property type="molecule type" value="Genomic_DNA"/>
</dbReference>
<dbReference type="EMBL" id="S80743">
    <property type="protein sequence ID" value="AAB50649.2"/>
    <property type="molecule type" value="Genomic_DNA"/>
</dbReference>
<dbReference type="EMBL" id="S71208">
    <property type="protein sequence ID" value="AAB20521.1"/>
    <property type="molecule type" value="Genomic_DNA"/>
</dbReference>
<dbReference type="EMBL" id="S71210">
    <property type="protein sequence ID" value="AAB20522.1"/>
    <property type="molecule type" value="Genomic_DNA"/>
</dbReference>
<dbReference type="EMBL" id="S71212">
    <property type="protein sequence ID" value="AAB20523.1"/>
    <property type="molecule type" value="Genomic_DNA"/>
</dbReference>
<dbReference type="CCDS" id="CCDS13080.1">
    <molecule id="P04156-1"/>
</dbReference>
<dbReference type="PIR" id="A24173">
    <property type="entry name" value="UJHU"/>
</dbReference>
<dbReference type="RefSeq" id="NP_000302.1">
    <molecule id="P04156-1"/>
    <property type="nucleotide sequence ID" value="NM_000311.5"/>
</dbReference>
<dbReference type="RefSeq" id="NP_001073590.1">
    <molecule id="P04156-1"/>
    <property type="nucleotide sequence ID" value="NM_001080121.3"/>
</dbReference>
<dbReference type="RefSeq" id="NP_001073591.1">
    <molecule id="P04156-1"/>
    <property type="nucleotide sequence ID" value="NM_001080122.3"/>
</dbReference>
<dbReference type="RefSeq" id="NP_001073592.1">
    <molecule id="P04156-1"/>
    <property type="nucleotide sequence ID" value="NM_001080123.3"/>
</dbReference>
<dbReference type="RefSeq" id="NP_001258490.1">
    <property type="nucleotide sequence ID" value="NM_001271561.2"/>
</dbReference>
<dbReference type="RefSeq" id="NP_898902.1">
    <molecule id="P04156-1"/>
    <property type="nucleotide sequence ID" value="NM_183079.4"/>
</dbReference>
<dbReference type="PDB" id="1E1G">
    <property type="method" value="NMR"/>
    <property type="chains" value="A=125-228"/>
</dbReference>
<dbReference type="PDB" id="1E1J">
    <property type="method" value="NMR"/>
    <property type="chains" value="A=125-228"/>
</dbReference>
<dbReference type="PDB" id="1E1P">
    <property type="method" value="NMR"/>
    <property type="chains" value="A=125-228"/>
</dbReference>
<dbReference type="PDB" id="1E1S">
    <property type="method" value="NMR"/>
    <property type="chains" value="A=125-228"/>
</dbReference>
<dbReference type="PDB" id="1E1U">
    <property type="method" value="NMR"/>
    <property type="chains" value="A=125-228"/>
</dbReference>
<dbReference type="PDB" id="1E1W">
    <property type="method" value="NMR"/>
    <property type="chains" value="A=125-228"/>
</dbReference>
<dbReference type="PDB" id="1FKC">
    <property type="method" value="NMR"/>
    <property type="chains" value="A=90-231"/>
</dbReference>
<dbReference type="PDB" id="1FO7">
    <property type="method" value="NMR"/>
    <property type="chains" value="A=90-231"/>
</dbReference>
<dbReference type="PDB" id="1H0L">
    <property type="method" value="NMR"/>
    <property type="chains" value="A=121-230"/>
</dbReference>
<dbReference type="PDB" id="1HJM">
    <property type="method" value="NMR"/>
    <property type="chains" value="A=125-228"/>
</dbReference>
<dbReference type="PDB" id="1HJN">
    <property type="method" value="NMR"/>
    <property type="chains" value="A=125-228"/>
</dbReference>
<dbReference type="PDB" id="1I4M">
    <property type="method" value="X-ray"/>
    <property type="resolution" value="2.00 A"/>
    <property type="chains" value="A=119-226"/>
</dbReference>
<dbReference type="PDB" id="1OEH">
    <property type="method" value="NMR"/>
    <property type="chains" value="A=77-84"/>
</dbReference>
<dbReference type="PDB" id="1OEI">
    <property type="method" value="NMR"/>
    <property type="chains" value="A=61-84"/>
</dbReference>
<dbReference type="PDB" id="1QLX">
    <property type="method" value="NMR"/>
    <property type="chains" value="A=23-230"/>
</dbReference>
<dbReference type="PDB" id="1QLZ">
    <property type="method" value="NMR"/>
    <property type="chains" value="A=23-230"/>
</dbReference>
<dbReference type="PDB" id="1QM0">
    <property type="method" value="NMR"/>
    <property type="chains" value="A=90-230"/>
</dbReference>
<dbReference type="PDB" id="1QM1">
    <property type="method" value="NMR"/>
    <property type="chains" value="A=90-230"/>
</dbReference>
<dbReference type="PDB" id="1QM2">
    <property type="method" value="NMR"/>
    <property type="chains" value="A=121-230"/>
</dbReference>
<dbReference type="PDB" id="1QM3">
    <property type="method" value="NMR"/>
    <property type="chains" value="A=121-230"/>
</dbReference>
<dbReference type="PDB" id="2IV4">
    <property type="method" value="NMR"/>
    <property type="chains" value="A=180-195"/>
</dbReference>
<dbReference type="PDB" id="2IV5">
    <property type="method" value="NMR"/>
    <property type="chains" value="A=173-195"/>
</dbReference>
<dbReference type="PDB" id="2IV6">
    <property type="method" value="NMR"/>
    <property type="chains" value="A=173-195"/>
</dbReference>
<dbReference type="PDB" id="2K1D">
    <property type="method" value="NMR"/>
    <property type="chains" value="A=90-231"/>
</dbReference>
<dbReference type="PDB" id="2KUN">
    <property type="method" value="NMR"/>
    <property type="chains" value="A=90-231"/>
</dbReference>
<dbReference type="PDB" id="2LBG">
    <property type="method" value="NMR"/>
    <property type="chains" value="A=110-136"/>
</dbReference>
<dbReference type="PDB" id="2LEJ">
    <property type="method" value="NMR"/>
    <property type="chains" value="A=90-231"/>
</dbReference>
<dbReference type="PDB" id="2LFT">
    <property type="method" value="NMR"/>
    <property type="chains" value="A=90-231"/>
</dbReference>
<dbReference type="PDB" id="2LSB">
    <property type="method" value="NMR"/>
    <property type="chains" value="A=90-231"/>
</dbReference>
<dbReference type="PDB" id="2LV1">
    <property type="method" value="NMR"/>
    <property type="chains" value="A=90-231"/>
</dbReference>
<dbReference type="PDB" id="2M8T">
    <property type="method" value="NMR"/>
    <property type="chains" value="A=90-231"/>
</dbReference>
<dbReference type="PDB" id="2OL9">
    <property type="method" value="X-ray"/>
    <property type="resolution" value="0.85 A"/>
    <property type="chains" value="A=170-175"/>
</dbReference>
<dbReference type="PDB" id="2W9E">
    <property type="method" value="X-ray"/>
    <property type="resolution" value="2.90 A"/>
    <property type="chains" value="A=119-231"/>
</dbReference>
<dbReference type="PDB" id="3HAF">
    <property type="method" value="X-ray"/>
    <property type="resolution" value="2.26 A"/>
    <property type="chains" value="A=90-231"/>
</dbReference>
<dbReference type="PDB" id="3HAK">
    <property type="method" value="X-ray"/>
    <property type="resolution" value="1.80 A"/>
    <property type="chains" value="A=125-227"/>
</dbReference>
<dbReference type="PDB" id="3HEQ">
    <property type="method" value="X-ray"/>
    <property type="resolution" value="1.80 A"/>
    <property type="chains" value="A/B=90-231"/>
</dbReference>
<dbReference type="PDB" id="3HER">
    <property type="method" value="X-ray"/>
    <property type="resolution" value="1.85 A"/>
    <property type="chains" value="A/B=90-231"/>
</dbReference>
<dbReference type="PDB" id="3HES">
    <property type="method" value="X-ray"/>
    <property type="resolution" value="2.00 A"/>
    <property type="chains" value="A/B=90-231"/>
</dbReference>
<dbReference type="PDB" id="3HJ5">
    <property type="method" value="X-ray"/>
    <property type="resolution" value="3.10 A"/>
    <property type="chains" value="A/B=90-231"/>
</dbReference>
<dbReference type="PDB" id="3HJX">
    <property type="method" value="X-ray"/>
    <property type="resolution" value="2.00 A"/>
    <property type="chains" value="A=126-231"/>
</dbReference>
<dbReference type="PDB" id="3MD4">
    <property type="method" value="X-ray"/>
    <property type="resolution" value="1.15 A"/>
    <property type="chains" value="A/B=127-132"/>
</dbReference>
<dbReference type="PDB" id="3MD5">
    <property type="method" value="X-ray"/>
    <property type="resolution" value="1.40 A"/>
    <property type="chains" value="A/B=127-132"/>
</dbReference>
<dbReference type="PDB" id="3NHC">
    <property type="method" value="X-ray"/>
    <property type="resolution" value="1.57 A"/>
    <property type="chains" value="A/B=127-132"/>
</dbReference>
<dbReference type="PDB" id="3NHD">
    <property type="method" value="X-ray"/>
    <property type="resolution" value="1.92 A"/>
    <property type="chains" value="A/B=127-132"/>
</dbReference>
<dbReference type="PDB" id="3NVF">
    <property type="method" value="X-ray"/>
    <property type="resolution" value="1.80 A"/>
    <property type="chains" value="A=138-143"/>
</dbReference>
<dbReference type="PDB" id="4DGI">
    <property type="method" value="X-ray"/>
    <property type="resolution" value="2.40 A"/>
    <property type="chains" value="A=120-230"/>
</dbReference>
<dbReference type="PDB" id="4E1H">
    <property type="method" value="X-ray"/>
    <property type="resolution" value="1.40 A"/>
    <property type="chains" value="A/C/E/G/I/K=177-182, B/D/F/H/J/L=211-216"/>
</dbReference>
<dbReference type="PDB" id="4E1I">
    <property type="method" value="X-ray"/>
    <property type="resolution" value="2.03 A"/>
    <property type="chains" value="A/C/E/G/I/K=177-182, B/D/F/H/J/L=211-216"/>
</dbReference>
<dbReference type="PDB" id="4KML">
    <property type="method" value="X-ray"/>
    <property type="resolution" value="1.50 A"/>
    <property type="chains" value="A=24-231"/>
</dbReference>
<dbReference type="PDB" id="4N9O">
    <property type="method" value="X-ray"/>
    <property type="resolution" value="1.50 A"/>
    <property type="chains" value="A=90-231"/>
</dbReference>
<dbReference type="PDB" id="5L6R">
    <property type="method" value="NMR"/>
    <property type="chains" value="A=90-226"/>
</dbReference>
<dbReference type="PDB" id="5YJ4">
    <property type="method" value="NMR"/>
    <property type="chains" value="A=91-231"/>
</dbReference>
<dbReference type="PDB" id="5YJ5">
    <property type="method" value="NMR"/>
    <property type="chains" value="A=91-231"/>
</dbReference>
<dbReference type="PDB" id="6DU9">
    <property type="method" value="X-ray"/>
    <property type="resolution" value="2.33 A"/>
    <property type="chains" value="A=90-230"/>
</dbReference>
<dbReference type="PDB" id="6LNI">
    <property type="method" value="EM"/>
    <property type="resolution" value="2.70 A"/>
    <property type="chains" value="A/B/C/D/E/F/G/H/I/J=23-231"/>
</dbReference>
<dbReference type="PDB" id="6PQ5">
    <property type="method" value="X-ray"/>
    <property type="resolution" value="1.50 A"/>
    <property type="chains" value="A/B=113-118"/>
</dbReference>
<dbReference type="PDB" id="6PQA">
    <property type="method" value="X-ray"/>
    <property type="resolution" value="1.46 A"/>
    <property type="chains" value="A=119-124"/>
</dbReference>
<dbReference type="PDB" id="6SUZ">
    <property type="method" value="X-ray"/>
    <property type="resolution" value="2.50 A"/>
    <property type="chains" value="A=125-223"/>
</dbReference>
<dbReference type="PDB" id="6SV2">
    <property type="method" value="X-ray"/>
    <property type="resolution" value="2.30 A"/>
    <property type="chains" value="A=119-231"/>
</dbReference>
<dbReference type="PDB" id="6UUR">
    <property type="method" value="EM"/>
    <property type="resolution" value="3.50 A"/>
    <property type="chains" value="A/B/C/D/E/F/G/H/I/J=94-178"/>
</dbReference>
<dbReference type="PDB" id="7DWV">
    <property type="method" value="EM"/>
    <property type="resolution" value="3.07 A"/>
    <property type="chains" value="A/B/C/D/E/F=23-231"/>
</dbReference>
<dbReference type="PDB" id="7FHQ">
    <property type="method" value="NMR"/>
    <property type="chains" value="A=91-231"/>
</dbReference>
<dbReference type="PDB" id="7RL4">
    <property type="method" value="EM"/>
    <property type="resolution" value="2.86 A"/>
    <property type="chains" value="A/B/C/D/E/F/G/H/I/J/K/L/M/N/O/P/Q/R/S/T=23-144"/>
</dbReference>
<dbReference type="PDB" id="7RVC">
    <property type="method" value="EM"/>
    <property type="resolution" value="1.00 A"/>
    <property type="chains" value="A=168-176"/>
</dbReference>
<dbReference type="PDB" id="7RVE">
    <property type="method" value="EM"/>
    <property type="resolution" value="0.85 A"/>
    <property type="chains" value="A=168-176"/>
</dbReference>
<dbReference type="PDB" id="7RVJ">
    <property type="method" value="EM"/>
    <property type="resolution" value="1.00 A"/>
    <property type="chains" value="A/B=169-175"/>
</dbReference>
<dbReference type="PDB" id="7RVK">
    <property type="method" value="EM"/>
    <property type="resolution" value="1.00 A"/>
    <property type="chains" value="A=169-175"/>
</dbReference>
<dbReference type="PDB" id="7RVL">
    <property type="method" value="EM"/>
    <property type="resolution" value="1.00 A"/>
    <property type="chains" value="A=168-176"/>
</dbReference>
<dbReference type="PDB" id="7UMQ">
    <property type="method" value="EM"/>
    <property type="resolution" value="3.29 A"/>
    <property type="chains" value="A/B/C/D/E/F/G/H/I/J=80-141"/>
</dbReference>
<dbReference type="PDB" id="7UN5">
    <property type="method" value="EM"/>
    <property type="resolution" value="3.13 A"/>
    <property type="chains" value="A/B/C/D/E/F/G/H/I/J=80-141"/>
</dbReference>
<dbReference type="PDBsum" id="1E1G"/>
<dbReference type="PDBsum" id="1E1J"/>
<dbReference type="PDBsum" id="1E1P"/>
<dbReference type="PDBsum" id="1E1S"/>
<dbReference type="PDBsum" id="1E1U"/>
<dbReference type="PDBsum" id="1E1W"/>
<dbReference type="PDBsum" id="1FKC"/>
<dbReference type="PDBsum" id="1FO7"/>
<dbReference type="PDBsum" id="1H0L"/>
<dbReference type="PDBsum" id="1HJM"/>
<dbReference type="PDBsum" id="1HJN"/>
<dbReference type="PDBsum" id="1I4M"/>
<dbReference type="PDBsum" id="1OEH"/>
<dbReference type="PDBsum" id="1OEI"/>
<dbReference type="PDBsum" id="1QLX"/>
<dbReference type="PDBsum" id="1QLZ"/>
<dbReference type="PDBsum" id="1QM0"/>
<dbReference type="PDBsum" id="1QM1"/>
<dbReference type="PDBsum" id="1QM2"/>
<dbReference type="PDBsum" id="1QM3"/>
<dbReference type="PDBsum" id="2IV4"/>
<dbReference type="PDBsum" id="2IV5"/>
<dbReference type="PDBsum" id="2IV6"/>
<dbReference type="PDBsum" id="2K1D"/>
<dbReference type="PDBsum" id="2KUN"/>
<dbReference type="PDBsum" id="2LBG"/>
<dbReference type="PDBsum" id="2LEJ"/>
<dbReference type="PDBsum" id="2LFT"/>
<dbReference type="PDBsum" id="2LSB"/>
<dbReference type="PDBsum" id="2LV1"/>
<dbReference type="PDBsum" id="2M8T"/>
<dbReference type="PDBsum" id="2OL9"/>
<dbReference type="PDBsum" id="2W9E"/>
<dbReference type="PDBsum" id="3HAF"/>
<dbReference type="PDBsum" id="3HAK"/>
<dbReference type="PDBsum" id="3HEQ"/>
<dbReference type="PDBsum" id="3HER"/>
<dbReference type="PDBsum" id="3HES"/>
<dbReference type="PDBsum" id="3HJ5"/>
<dbReference type="PDBsum" id="3HJX"/>
<dbReference type="PDBsum" id="3MD4"/>
<dbReference type="PDBsum" id="3MD5"/>
<dbReference type="PDBsum" id="3NHC"/>
<dbReference type="PDBsum" id="3NHD"/>
<dbReference type="PDBsum" id="3NVF"/>
<dbReference type="PDBsum" id="4DGI"/>
<dbReference type="PDBsum" id="4E1H"/>
<dbReference type="PDBsum" id="4E1I"/>
<dbReference type="PDBsum" id="4KML"/>
<dbReference type="PDBsum" id="4N9O"/>
<dbReference type="PDBsum" id="5L6R"/>
<dbReference type="PDBsum" id="5YJ4"/>
<dbReference type="PDBsum" id="5YJ5"/>
<dbReference type="PDBsum" id="6DU9"/>
<dbReference type="PDBsum" id="6LNI"/>
<dbReference type="PDBsum" id="6PQ5"/>
<dbReference type="PDBsum" id="6PQA"/>
<dbReference type="PDBsum" id="6SUZ"/>
<dbReference type="PDBsum" id="6SV2"/>
<dbReference type="PDBsum" id="6UUR"/>
<dbReference type="PDBsum" id="7DWV"/>
<dbReference type="PDBsum" id="7FHQ"/>
<dbReference type="PDBsum" id="7RL4"/>
<dbReference type="PDBsum" id="7RVC"/>
<dbReference type="PDBsum" id="7RVE"/>
<dbReference type="PDBsum" id="7RVJ"/>
<dbReference type="PDBsum" id="7RVK"/>
<dbReference type="PDBsum" id="7RVL"/>
<dbReference type="PDBsum" id="7UMQ"/>
<dbReference type="PDBsum" id="7UN5"/>
<dbReference type="BMRB" id="P04156"/>
<dbReference type="EMDB" id="EMD-0931"/>
<dbReference type="EMDB" id="EMD-20900"/>
<dbReference type="EMDB" id="EMD-24514"/>
<dbReference type="EMDB" id="EMD-26607"/>
<dbReference type="EMDB" id="EMD-26613"/>
<dbReference type="EMDB" id="EMD-30887"/>
<dbReference type="SASBDB" id="P04156"/>
<dbReference type="SMR" id="P04156"/>
<dbReference type="BioGRID" id="111606">
    <property type="interactions" value="1116"/>
</dbReference>
<dbReference type="CORUM" id="P04156"/>
<dbReference type="DIP" id="DIP-29933N"/>
<dbReference type="ELM" id="P04156"/>
<dbReference type="FunCoup" id="P04156">
    <property type="interactions" value="501"/>
</dbReference>
<dbReference type="IntAct" id="P04156">
    <property type="interactions" value="443"/>
</dbReference>
<dbReference type="MINT" id="P04156"/>
<dbReference type="STRING" id="9606.ENSP00000399376"/>
<dbReference type="BindingDB" id="P04156"/>
<dbReference type="ChEMBL" id="CHEMBL4869"/>
<dbReference type="DrugBank" id="DB09130">
    <property type="generic name" value="Copper"/>
</dbReference>
<dbReference type="DrugBank" id="DB00759">
    <property type="generic name" value="Tetracycline"/>
</dbReference>
<dbReference type="DrugCentral" id="P04156"/>
<dbReference type="MoonDB" id="P04156">
    <property type="type" value="Predicted"/>
</dbReference>
<dbReference type="TCDB" id="1.C.48.1.2">
    <property type="family name" value="the prion peptide (prp) family"/>
</dbReference>
<dbReference type="GlyConnect" id="2056">
    <property type="glycosylation" value="3 N-Linked glycans (1 site)"/>
</dbReference>
<dbReference type="GlyCosmos" id="P04156">
    <property type="glycosylation" value="2 sites, 6 glycans"/>
</dbReference>
<dbReference type="GlyGen" id="P04156">
    <property type="glycosylation" value="9 sites, 12 N-linked glycans (2 sites), 2 O-linked glycans (2 sites)"/>
</dbReference>
<dbReference type="iPTMnet" id="P04156"/>
<dbReference type="MetOSite" id="P04156"/>
<dbReference type="PhosphoSitePlus" id="P04156"/>
<dbReference type="SwissPalm" id="P04156"/>
<dbReference type="BioMuta" id="PRNP"/>
<dbReference type="DMDM" id="130912"/>
<dbReference type="jPOST" id="P04156"/>
<dbReference type="MassIVE" id="P04156"/>
<dbReference type="PaxDb" id="9606-ENSP00000368752"/>
<dbReference type="PeptideAtlas" id="P04156"/>
<dbReference type="ProteomicsDB" id="51667">
    <molecule id="P04156-1"/>
</dbReference>
<dbReference type="Pumba" id="P04156"/>
<dbReference type="ABCD" id="P04156">
    <property type="antibodies" value="3 sequenced antibodies"/>
</dbReference>
<dbReference type="Antibodypedia" id="3351">
    <property type="antibodies" value="874 antibodies from 46 providers"/>
</dbReference>
<dbReference type="DNASU" id="5621"/>
<dbReference type="Ensembl" id="ENST00000379440.9">
    <molecule id="P04156-1"/>
    <property type="protein sequence ID" value="ENSP00000368752.4"/>
    <property type="gene ID" value="ENSG00000171867.18"/>
</dbReference>
<dbReference type="Ensembl" id="ENST00000424424.2">
    <molecule id="P04156-1"/>
    <property type="protein sequence ID" value="ENSP00000411599.2"/>
    <property type="gene ID" value="ENSG00000171867.18"/>
</dbReference>
<dbReference type="Ensembl" id="ENST00000430350.2">
    <molecule id="P04156-1"/>
    <property type="protein sequence ID" value="ENSP00000399376.2"/>
    <property type="gene ID" value="ENSG00000171867.18"/>
</dbReference>
<dbReference type="Ensembl" id="ENST00000457586.2">
    <molecule id="P04156-1"/>
    <property type="protein sequence ID" value="ENSP00000415284.2"/>
    <property type="gene ID" value="ENSG00000171867.18"/>
</dbReference>
<dbReference type="GeneID" id="5621"/>
<dbReference type="KEGG" id="hsa:5621"/>
<dbReference type="MANE-Select" id="ENST00000379440.9">
    <property type="protein sequence ID" value="ENSP00000368752.4"/>
    <property type="RefSeq nucleotide sequence ID" value="NM_000311.5"/>
    <property type="RefSeq protein sequence ID" value="NP_000302.1"/>
</dbReference>
<dbReference type="AGR" id="HGNC:9449"/>
<dbReference type="CTD" id="5621"/>
<dbReference type="DisGeNET" id="5621"/>
<dbReference type="GeneCards" id="PRNP"/>
<dbReference type="GeneReviews" id="PRNP"/>
<dbReference type="HGNC" id="HGNC:9449">
    <property type="gene designation" value="PRNP"/>
</dbReference>
<dbReference type="HPA" id="ENSG00000171867">
    <property type="expression patterns" value="Tissue enhanced (choroid)"/>
</dbReference>
<dbReference type="MalaCards" id="PRNP"/>
<dbReference type="MIM" id="123400">
    <property type="type" value="phenotype"/>
</dbReference>
<dbReference type="MIM" id="137440">
    <property type="type" value="phenotype"/>
</dbReference>
<dbReference type="MIM" id="176640">
    <property type="type" value="gene"/>
</dbReference>
<dbReference type="MIM" id="245300">
    <property type="type" value="phenotype"/>
</dbReference>
<dbReference type="MIM" id="600072">
    <property type="type" value="phenotype"/>
</dbReference>
<dbReference type="MIM" id="603218">
    <property type="type" value="phenotype"/>
</dbReference>
<dbReference type="MIM" id="606688">
    <property type="type" value="phenotype"/>
</dbReference>
<dbReference type="neXtProt" id="NX_P04156"/>
<dbReference type="OpenTargets" id="ENSG00000171867"/>
<dbReference type="Orphanet" id="280397">
    <property type="disease" value="Familial Alzheimer-like prion disease"/>
</dbReference>
<dbReference type="Orphanet" id="466">
    <property type="disease" value="Fatal familial insomnia"/>
</dbReference>
<dbReference type="Orphanet" id="356">
    <property type="disease" value="Gerstmann-Straussler-Scheinker syndrome"/>
</dbReference>
<dbReference type="Orphanet" id="157941">
    <property type="disease" value="Huntington disease-like 1"/>
</dbReference>
<dbReference type="Orphanet" id="282166">
    <property type="disease" value="Inherited Creutzfeldt-Jakob disease"/>
</dbReference>
<dbReference type="Orphanet" id="454745">
    <property type="disease" value="Kuru"/>
</dbReference>
<dbReference type="Orphanet" id="397606">
    <property type="disease" value="PrP systemic amyloidosis"/>
</dbReference>
<dbReference type="PharmGKB" id="PA33796"/>
<dbReference type="VEuPathDB" id="HostDB:ENSG00000171867"/>
<dbReference type="eggNOG" id="ENOG502S2A8">
    <property type="taxonomic scope" value="Eukaryota"/>
</dbReference>
<dbReference type="GeneTree" id="ENSGT00510000049083"/>
<dbReference type="InParanoid" id="P04156"/>
<dbReference type="OMA" id="QMCTTQY"/>
<dbReference type="OrthoDB" id="9048788at2759"/>
<dbReference type="PAN-GO" id="P04156">
    <property type="GO annotations" value="3 GO annotations based on evolutionary models"/>
</dbReference>
<dbReference type="PhylomeDB" id="P04156"/>
<dbReference type="TreeFam" id="TF105188"/>
<dbReference type="PathwayCommons" id="P04156"/>
<dbReference type="Reactome" id="R-HSA-419037">
    <property type="pathway name" value="NCAM1 interactions"/>
</dbReference>
<dbReference type="Reactome" id="R-HSA-9609523">
    <property type="pathway name" value="Insertion of tail-anchored proteins into the endoplasmic reticulum membrane"/>
</dbReference>
<dbReference type="SignaLink" id="P04156"/>
<dbReference type="BioGRID-ORCS" id="5621">
    <property type="hits" value="10 hits in 1169 CRISPR screens"/>
</dbReference>
<dbReference type="CD-CODE" id="7A2E2A6F">
    <property type="entry name" value="Synthetic Condensate 000125"/>
</dbReference>
<dbReference type="CD-CODE" id="8188F968">
    <property type="entry name" value="Tau-Prion Multiphasic condensate"/>
</dbReference>
<dbReference type="CD-CODE" id="9F779CC8">
    <property type="entry name" value="Nuclear body"/>
</dbReference>
<dbReference type="ChiTaRS" id="PRNP">
    <property type="organism name" value="human"/>
</dbReference>
<dbReference type="EvolutionaryTrace" id="P04156"/>
<dbReference type="GenomeRNAi" id="5621"/>
<dbReference type="Pharos" id="P04156">
    <property type="development level" value="Tchem"/>
</dbReference>
<dbReference type="Proteomes" id="UP000005640">
    <property type="component" value="Chromosome 20"/>
</dbReference>
<dbReference type="RNAct" id="P04156">
    <property type="molecule type" value="protein"/>
</dbReference>
<dbReference type="Bgee" id="ENSG00000171867">
    <property type="expression patterns" value="Expressed in Brodmann (1909) area 23 and 209 other cell types or tissues"/>
</dbReference>
<dbReference type="ExpressionAtlas" id="P04156">
    <property type="expression patterns" value="baseline and differential"/>
</dbReference>
<dbReference type="GO" id="GO:0009986">
    <property type="term" value="C:cell surface"/>
    <property type="evidence" value="ECO:0000314"/>
    <property type="project" value="UniProtKB"/>
</dbReference>
<dbReference type="GO" id="GO:0005737">
    <property type="term" value="C:cytoplasm"/>
    <property type="evidence" value="ECO:0000304"/>
    <property type="project" value="UniProtKB"/>
</dbReference>
<dbReference type="GO" id="GO:0005829">
    <property type="term" value="C:cytosol"/>
    <property type="evidence" value="ECO:0000314"/>
    <property type="project" value="HPA"/>
</dbReference>
<dbReference type="GO" id="GO:0030425">
    <property type="term" value="C:dendrite"/>
    <property type="evidence" value="ECO:0000314"/>
    <property type="project" value="ARUK-UCL"/>
</dbReference>
<dbReference type="GO" id="GO:0005783">
    <property type="term" value="C:endoplasmic reticulum"/>
    <property type="evidence" value="ECO:0000250"/>
    <property type="project" value="UniProtKB"/>
</dbReference>
<dbReference type="GO" id="GO:0009897">
    <property type="term" value="C:external side of plasma membrane"/>
    <property type="evidence" value="ECO:0000303"/>
    <property type="project" value="ARUK-UCL"/>
</dbReference>
<dbReference type="GO" id="GO:0070062">
    <property type="term" value="C:extracellular exosome"/>
    <property type="evidence" value="ECO:0007005"/>
    <property type="project" value="UniProtKB"/>
</dbReference>
<dbReference type="GO" id="GO:0019898">
    <property type="term" value="C:extrinsic component of membrane"/>
    <property type="evidence" value="ECO:0000304"/>
    <property type="project" value="UniProtKB"/>
</dbReference>
<dbReference type="GO" id="GO:0005794">
    <property type="term" value="C:Golgi apparatus"/>
    <property type="evidence" value="ECO:0000250"/>
    <property type="project" value="UniProtKB"/>
</dbReference>
<dbReference type="GO" id="GO:0016234">
    <property type="term" value="C:inclusion body"/>
    <property type="evidence" value="ECO:0000315"/>
    <property type="project" value="CAFA"/>
</dbReference>
<dbReference type="GO" id="GO:0043231">
    <property type="term" value="C:intracellular membrane-bounded organelle"/>
    <property type="evidence" value="ECO:0000314"/>
    <property type="project" value="HPA"/>
</dbReference>
<dbReference type="GO" id="GO:0045121">
    <property type="term" value="C:membrane raft"/>
    <property type="evidence" value="ECO:0000314"/>
    <property type="project" value="MGI"/>
</dbReference>
<dbReference type="GO" id="GO:0031965">
    <property type="term" value="C:nuclear membrane"/>
    <property type="evidence" value="ECO:0000314"/>
    <property type="project" value="HPA"/>
</dbReference>
<dbReference type="GO" id="GO:0005886">
    <property type="term" value="C:plasma membrane"/>
    <property type="evidence" value="ECO:0000314"/>
    <property type="project" value="UniProtKB"/>
</dbReference>
<dbReference type="GO" id="GO:0098794">
    <property type="term" value="C:postsynapse"/>
    <property type="evidence" value="ECO:0000304"/>
    <property type="project" value="ARUK-UCL"/>
</dbReference>
<dbReference type="GO" id="GO:0014069">
    <property type="term" value="C:postsynaptic density"/>
    <property type="evidence" value="ECO:0000250"/>
    <property type="project" value="ARUK-UCL"/>
</dbReference>
<dbReference type="GO" id="GO:0043195">
    <property type="term" value="C:terminal bouton"/>
    <property type="evidence" value="ECO:0007669"/>
    <property type="project" value="Ensembl"/>
</dbReference>
<dbReference type="GO" id="GO:0001540">
    <property type="term" value="F:amyloid-beta binding"/>
    <property type="evidence" value="ECO:0000314"/>
    <property type="project" value="ARUK-UCL"/>
</dbReference>
<dbReference type="GO" id="GO:0019828">
    <property type="term" value="F:aspartic-type endopeptidase inhibitor activity"/>
    <property type="evidence" value="ECO:0000250"/>
    <property type="project" value="ARUK-UCL"/>
</dbReference>
<dbReference type="GO" id="GO:0043008">
    <property type="term" value="F:ATP-dependent protein binding"/>
    <property type="evidence" value="ECO:0007669"/>
    <property type="project" value="Ensembl"/>
</dbReference>
<dbReference type="GO" id="GO:0005507">
    <property type="term" value="F:copper ion binding"/>
    <property type="evidence" value="ECO:0000314"/>
    <property type="project" value="UniProtKB"/>
</dbReference>
<dbReference type="GO" id="GO:1903135">
    <property type="term" value="F:cupric ion binding"/>
    <property type="evidence" value="ECO:0007669"/>
    <property type="project" value="Ensembl"/>
</dbReference>
<dbReference type="GO" id="GO:1903136">
    <property type="term" value="F:cuprous ion binding"/>
    <property type="evidence" value="ECO:0000315"/>
    <property type="project" value="CAFA"/>
</dbReference>
<dbReference type="GO" id="GO:0005539">
    <property type="term" value="F:glycosaminoglycan binding"/>
    <property type="evidence" value="ECO:0000250"/>
    <property type="project" value="ARUK-UCL"/>
</dbReference>
<dbReference type="GO" id="GO:0042802">
    <property type="term" value="F:identical protein binding"/>
    <property type="evidence" value="ECO:0000353"/>
    <property type="project" value="IntAct"/>
</dbReference>
<dbReference type="GO" id="GO:0005521">
    <property type="term" value="F:lamin binding"/>
    <property type="evidence" value="ECO:0007669"/>
    <property type="project" value="Ensembl"/>
</dbReference>
<dbReference type="GO" id="GO:0008017">
    <property type="term" value="F:microtubule binding"/>
    <property type="evidence" value="ECO:0000314"/>
    <property type="project" value="UniProtKB"/>
</dbReference>
<dbReference type="GO" id="GO:0060090">
    <property type="term" value="F:molecular adaptor activity"/>
    <property type="evidence" value="ECO:0000314"/>
    <property type="project" value="DisProt"/>
</dbReference>
<dbReference type="GO" id="GO:0140693">
    <property type="term" value="F:molecular condensate scaffold activity"/>
    <property type="evidence" value="ECO:0000314"/>
    <property type="project" value="DisProt"/>
</dbReference>
<dbReference type="GO" id="GO:0140677">
    <property type="term" value="F:molecular function activator activity"/>
    <property type="evidence" value="ECO:0007669"/>
    <property type="project" value="Ensembl"/>
</dbReference>
<dbReference type="GO" id="GO:0002020">
    <property type="term" value="F:protease binding"/>
    <property type="evidence" value="ECO:0000250"/>
    <property type="project" value="ARUK-UCL"/>
</dbReference>
<dbReference type="GO" id="GO:0044877">
    <property type="term" value="F:protein-containing complex binding"/>
    <property type="evidence" value="ECO:0000353"/>
    <property type="project" value="ARUK-UCL"/>
</dbReference>
<dbReference type="GO" id="GO:0051087">
    <property type="term" value="F:protein-folding chaperone binding"/>
    <property type="evidence" value="ECO:0007669"/>
    <property type="project" value="Ensembl"/>
</dbReference>
<dbReference type="GO" id="GO:0038023">
    <property type="term" value="F:signaling receptor activity"/>
    <property type="evidence" value="ECO:0000250"/>
    <property type="project" value="ARUK-UCL"/>
</dbReference>
<dbReference type="GO" id="GO:0044325">
    <property type="term" value="F:transmembrane transporter binding"/>
    <property type="evidence" value="ECO:0007669"/>
    <property type="project" value="Ensembl"/>
</dbReference>
<dbReference type="GO" id="GO:0015631">
    <property type="term" value="F:tubulin binding"/>
    <property type="evidence" value="ECO:0000314"/>
    <property type="project" value="UniProtKB"/>
</dbReference>
<dbReference type="GO" id="GO:0031802">
    <property type="term" value="F:type 5 metabotropic glutamate receptor binding"/>
    <property type="evidence" value="ECO:0000250"/>
    <property type="project" value="ARUK-UCL"/>
</dbReference>
<dbReference type="GO" id="GO:1904646">
    <property type="term" value="P:cellular response to amyloid-beta"/>
    <property type="evidence" value="ECO:0000316"/>
    <property type="project" value="ARUK-UCL"/>
</dbReference>
<dbReference type="GO" id="GO:0071280">
    <property type="term" value="P:cellular response to copper ion"/>
    <property type="evidence" value="ECO:0000314"/>
    <property type="project" value="MGI"/>
</dbReference>
<dbReference type="GO" id="GO:0071466">
    <property type="term" value="P:cellular response to xenobiotic stimulus"/>
    <property type="evidence" value="ECO:0007669"/>
    <property type="project" value="Ensembl"/>
</dbReference>
<dbReference type="GO" id="GO:0097062">
    <property type="term" value="P:dendritic spine maintenance"/>
    <property type="evidence" value="ECO:0000304"/>
    <property type="project" value="ARUK-UCL"/>
</dbReference>
<dbReference type="GO" id="GO:0006878">
    <property type="term" value="P:intracellular copper ion homeostasis"/>
    <property type="evidence" value="ECO:0000303"/>
    <property type="project" value="UniProtKB"/>
</dbReference>
<dbReference type="GO" id="GO:0035556">
    <property type="term" value="P:intracellular signal transduction"/>
    <property type="evidence" value="ECO:0000314"/>
    <property type="project" value="ARUK-UCL"/>
</dbReference>
<dbReference type="GO" id="GO:0007611">
    <property type="term" value="P:learning or memory"/>
    <property type="evidence" value="ECO:0000250"/>
    <property type="project" value="ARUK-UCL"/>
</dbReference>
<dbReference type="GO" id="GO:0007616">
    <property type="term" value="P:long-term memory"/>
    <property type="evidence" value="ECO:0000304"/>
    <property type="project" value="ARUK-UCL"/>
</dbReference>
<dbReference type="GO" id="GO:0046007">
    <property type="term" value="P:negative regulation of activated T cell proliferation"/>
    <property type="evidence" value="ECO:0000250"/>
    <property type="project" value="BHF-UCL"/>
</dbReference>
<dbReference type="GO" id="GO:1902992">
    <property type="term" value="P:negative regulation of amyloid precursor protein catabolic process"/>
    <property type="evidence" value="ECO:0000250"/>
    <property type="project" value="ARUK-UCL"/>
</dbReference>
<dbReference type="GO" id="GO:1902430">
    <property type="term" value="P:negative regulation of amyloid-beta formation"/>
    <property type="evidence" value="ECO:0000250"/>
    <property type="project" value="ARUK-UCL"/>
</dbReference>
<dbReference type="GO" id="GO:0043066">
    <property type="term" value="P:negative regulation of apoptotic process"/>
    <property type="evidence" value="ECO:0007669"/>
    <property type="project" value="Ensembl"/>
</dbReference>
<dbReference type="GO" id="GO:0070885">
    <property type="term" value="P:negative regulation of calcineurin-NFAT signaling cascade"/>
    <property type="evidence" value="ECO:0000250"/>
    <property type="project" value="BHF-UCL"/>
</dbReference>
<dbReference type="GO" id="GO:1902951">
    <property type="term" value="P:negative regulation of dendritic spine maintenance"/>
    <property type="evidence" value="ECO:0000250"/>
    <property type="project" value="ARUK-UCL"/>
</dbReference>
<dbReference type="GO" id="GO:0032700">
    <property type="term" value="P:negative regulation of interleukin-17 production"/>
    <property type="evidence" value="ECO:0000250"/>
    <property type="project" value="BHF-UCL"/>
</dbReference>
<dbReference type="GO" id="GO:0032703">
    <property type="term" value="P:negative regulation of interleukin-2 production"/>
    <property type="evidence" value="ECO:0000250"/>
    <property type="project" value="BHF-UCL"/>
</dbReference>
<dbReference type="GO" id="GO:1900272">
    <property type="term" value="P:negative regulation of long-term synaptic potentiation"/>
    <property type="evidence" value="ECO:0007669"/>
    <property type="project" value="Ensembl"/>
</dbReference>
<dbReference type="GO" id="GO:0010955">
    <property type="term" value="P:negative regulation of protein processing"/>
    <property type="evidence" value="ECO:0000304"/>
    <property type="project" value="ARUK-UCL"/>
</dbReference>
<dbReference type="GO" id="GO:0050860">
    <property type="term" value="P:negative regulation of T cell receptor signaling pathway"/>
    <property type="evidence" value="ECO:0000250"/>
    <property type="project" value="BHF-UCL"/>
</dbReference>
<dbReference type="GO" id="GO:0000122">
    <property type="term" value="P:negative regulation of transcription by RNA polymerase II"/>
    <property type="evidence" value="ECO:0000250"/>
    <property type="project" value="BHF-UCL"/>
</dbReference>
<dbReference type="GO" id="GO:0032689">
    <property type="term" value="P:negative regulation of type II interferon production"/>
    <property type="evidence" value="ECO:0000250"/>
    <property type="project" value="BHF-UCL"/>
</dbReference>
<dbReference type="GO" id="GO:1990535">
    <property type="term" value="P:neuron projection maintenance"/>
    <property type="evidence" value="ECO:0000250"/>
    <property type="project" value="ARUK-UCL"/>
</dbReference>
<dbReference type="GO" id="GO:0050850">
    <property type="term" value="P:positive regulation of calcium-mediated signaling"/>
    <property type="evidence" value="ECO:0000316"/>
    <property type="project" value="ARUK-UCL"/>
</dbReference>
<dbReference type="GO" id="GO:1900451">
    <property type="term" value="P:positive regulation of glutamate receptor signaling pathway"/>
    <property type="evidence" value="ECO:0000316"/>
    <property type="project" value="ARUK-UCL"/>
</dbReference>
<dbReference type="GO" id="GO:0043525">
    <property type="term" value="P:positive regulation of neuron apoptotic process"/>
    <property type="evidence" value="ECO:0000315"/>
    <property type="project" value="CAFA"/>
</dbReference>
<dbReference type="GO" id="GO:1903078">
    <property type="term" value="P:positive regulation of protein localization to plasma membrane"/>
    <property type="evidence" value="ECO:0007669"/>
    <property type="project" value="Ensembl"/>
</dbReference>
<dbReference type="GO" id="GO:0090314">
    <property type="term" value="P:positive regulation of protein targeting to membrane"/>
    <property type="evidence" value="ECO:0000250"/>
    <property type="project" value="ARUK-UCL"/>
</dbReference>
<dbReference type="GO" id="GO:0031648">
    <property type="term" value="P:protein destabilization"/>
    <property type="evidence" value="ECO:0000315"/>
    <property type="project" value="CAFA"/>
</dbReference>
<dbReference type="GO" id="GO:0051260">
    <property type="term" value="P:protein homooligomerization"/>
    <property type="evidence" value="ECO:0007669"/>
    <property type="project" value="InterPro"/>
</dbReference>
<dbReference type="GO" id="GO:1905664">
    <property type="term" value="P:regulation of calcium ion import across plasma membrane"/>
    <property type="evidence" value="ECO:0000250"/>
    <property type="project" value="ARUK-UCL"/>
</dbReference>
<dbReference type="GO" id="GO:0051726">
    <property type="term" value="P:regulation of cell cycle"/>
    <property type="evidence" value="ECO:0007669"/>
    <property type="project" value="UniProtKB-KW"/>
</dbReference>
<dbReference type="GO" id="GO:1900449">
    <property type="term" value="P:regulation of glutamate receptor signaling pathway"/>
    <property type="evidence" value="ECO:0000250"/>
    <property type="project" value="ARUK-UCL"/>
</dbReference>
<dbReference type="GO" id="GO:1901379">
    <property type="term" value="P:regulation of potassium ion transmembrane transport"/>
    <property type="evidence" value="ECO:0007669"/>
    <property type="project" value="Ensembl"/>
</dbReference>
<dbReference type="GO" id="GO:1904645">
    <property type="term" value="P:response to amyloid-beta"/>
    <property type="evidence" value="ECO:0000250"/>
    <property type="project" value="ARUK-UCL"/>
</dbReference>
<dbReference type="GO" id="GO:0046686">
    <property type="term" value="P:response to cadmium ion"/>
    <property type="evidence" value="ECO:0007669"/>
    <property type="project" value="Ensembl"/>
</dbReference>
<dbReference type="GO" id="GO:0006979">
    <property type="term" value="P:response to oxidative stress"/>
    <property type="evidence" value="ECO:0000250"/>
    <property type="project" value="UniProtKB"/>
</dbReference>
<dbReference type="DisProt" id="DP00466"/>
<dbReference type="FunFam" id="1.10.790.10:FF:000001">
    <property type="entry name" value="Major prion protein"/>
    <property type="match status" value="1"/>
</dbReference>
<dbReference type="Gene3D" id="1.10.790.10">
    <property type="entry name" value="Prion/Doppel protein, beta-ribbon domain"/>
    <property type="match status" value="1"/>
</dbReference>
<dbReference type="InterPro" id="IPR000817">
    <property type="entry name" value="Prion"/>
</dbReference>
<dbReference type="InterPro" id="IPR036924">
    <property type="entry name" value="Prion/Doppel_b-ribbon_dom_sf"/>
</dbReference>
<dbReference type="InterPro" id="IPR022416">
    <property type="entry name" value="Prion/Doppel_prot_b-ribbon_dom"/>
</dbReference>
<dbReference type="InterPro" id="IPR020949">
    <property type="entry name" value="Prion_copper_b_octapeptide"/>
</dbReference>
<dbReference type="InterPro" id="IPR025860">
    <property type="entry name" value="Prion_N"/>
</dbReference>
<dbReference type="PANTHER" id="PTHR15506">
    <property type="entry name" value="DOPPEL PRION"/>
    <property type="match status" value="1"/>
</dbReference>
<dbReference type="PANTHER" id="PTHR15506:SF2">
    <property type="entry name" value="MAJOR PRION PROTEIN"/>
    <property type="match status" value="1"/>
</dbReference>
<dbReference type="Pfam" id="PF00377">
    <property type="entry name" value="Prion"/>
    <property type="match status" value="1"/>
</dbReference>
<dbReference type="Pfam" id="PF11587">
    <property type="entry name" value="Prion_bPrPp"/>
    <property type="match status" value="1"/>
</dbReference>
<dbReference type="Pfam" id="PF03991">
    <property type="entry name" value="Prion_octapep"/>
    <property type="match status" value="1"/>
</dbReference>
<dbReference type="PRINTS" id="PR00341">
    <property type="entry name" value="PRION"/>
</dbReference>
<dbReference type="SMART" id="SM00157">
    <property type="entry name" value="PRP"/>
    <property type="match status" value="1"/>
</dbReference>
<dbReference type="SUPFAM" id="SSF54098">
    <property type="entry name" value="Prion-like"/>
    <property type="match status" value="1"/>
</dbReference>
<dbReference type="PROSITE" id="PS00291">
    <property type="entry name" value="PRION_1"/>
    <property type="match status" value="1"/>
</dbReference>
<dbReference type="PROSITE" id="PS00706">
    <property type="entry name" value="PRION_2"/>
    <property type="match status" value="1"/>
</dbReference>
<keyword id="KW-0002">3D-structure</keyword>
<keyword id="KW-0024">Alternative initiation</keyword>
<keyword id="KW-0034">Amyloid</keyword>
<keyword id="KW-1008">Amyloidosis</keyword>
<keyword id="KW-0131">Cell cycle</keyword>
<keyword id="KW-1003">Cell membrane</keyword>
<keyword id="KW-0186">Copper</keyword>
<keyword id="KW-0903">Direct protein sequencing</keyword>
<keyword id="KW-0225">Disease variant</keyword>
<keyword id="KW-1015">Disulfide bond</keyword>
<keyword id="KW-0325">Glycoprotein</keyword>
<keyword id="KW-0333">Golgi apparatus</keyword>
<keyword id="KW-0336">GPI-anchor</keyword>
<keyword id="KW-0338">Growth arrest</keyword>
<keyword id="KW-0449">Lipoprotein</keyword>
<keyword id="KW-0472">Membrane</keyword>
<keyword id="KW-0479">Metal-binding</keyword>
<keyword id="KW-0640">Prion</keyword>
<keyword id="KW-1267">Proteomics identification</keyword>
<keyword id="KW-1185">Reference proteome</keyword>
<keyword id="KW-0677">Repeat</keyword>
<keyword id="KW-0732">Signal</keyword>
<keyword id="KW-0862">Zinc</keyword>
<protein>
    <recommendedName>
        <fullName>Major prion protein</fullName>
        <shortName>PrP</shortName>
    </recommendedName>
    <alternativeName>
        <fullName>ASCR</fullName>
    </alternativeName>
    <alternativeName>
        <fullName>PrP27-30</fullName>
    </alternativeName>
    <alternativeName>
        <fullName>PrP33-35C</fullName>
    </alternativeName>
    <cdAntigenName>CD230</cdAntigenName>
</protein>
<feature type="signal peptide" evidence="2">
    <location>
        <begin position="1"/>
        <end position="22"/>
    </location>
</feature>
<feature type="chain" id="PRO_0000025675" description="Major prion protein">
    <location>
        <begin position="23"/>
        <end position="230"/>
    </location>
</feature>
<feature type="propeptide" id="PRO_0000025676" description="Removed in mature form" evidence="1">
    <location>
        <begin position="231"/>
        <end position="253"/>
    </location>
</feature>
<feature type="repeat" description="1">
    <location>
        <begin position="51"/>
        <end position="59"/>
    </location>
</feature>
<feature type="repeat" description="2">
    <location>
        <begin position="60"/>
        <end position="67"/>
    </location>
</feature>
<feature type="repeat" description="3">
    <location>
        <begin position="68"/>
        <end position="75"/>
    </location>
</feature>
<feature type="repeat" description="4">
    <location>
        <begin position="76"/>
        <end position="83"/>
    </location>
</feature>
<feature type="repeat" description="5">
    <location>
        <begin position="84"/>
        <end position="91"/>
    </location>
</feature>
<feature type="region of interest" description="Interaction with GRB2, ERI3 and SYN1" evidence="2">
    <location>
        <begin position="23"/>
        <end position="230"/>
    </location>
</feature>
<feature type="region of interest" description="Interaction with ADGRG6" evidence="2">
    <location>
        <begin position="23"/>
        <end position="38"/>
    </location>
</feature>
<feature type="region of interest" description="Disordered" evidence="3">
    <location>
        <begin position="26"/>
        <end position="108"/>
    </location>
</feature>
<feature type="region of interest" description="5 X 8 AA tandem repeats of P-H-G-G-G-W-G-Q">
    <location>
        <begin position="51"/>
        <end position="91"/>
    </location>
</feature>
<feature type="compositionally biased region" description="Gly residues" evidence="3">
    <location>
        <begin position="52"/>
        <end position="95"/>
    </location>
</feature>
<feature type="binding site" evidence="10">
    <location>
        <position position="61"/>
    </location>
    <ligand>
        <name>Cu(2+)</name>
        <dbReference type="ChEBI" id="CHEBI:29036"/>
        <label>1</label>
    </ligand>
</feature>
<feature type="binding site" evidence="10">
    <location>
        <position position="62"/>
    </location>
    <ligand>
        <name>Cu(2+)</name>
        <dbReference type="ChEBI" id="CHEBI:29036"/>
        <label>1</label>
    </ligand>
</feature>
<feature type="binding site" evidence="10">
    <location>
        <position position="63"/>
    </location>
    <ligand>
        <name>Cu(2+)</name>
        <dbReference type="ChEBI" id="CHEBI:29036"/>
        <label>1</label>
    </ligand>
</feature>
<feature type="binding site" evidence="53">
    <location>
        <position position="69"/>
    </location>
    <ligand>
        <name>Cu(2+)</name>
        <dbReference type="ChEBI" id="CHEBI:29036"/>
        <label>2</label>
    </ligand>
</feature>
<feature type="binding site" evidence="53">
    <location>
        <position position="70"/>
    </location>
    <ligand>
        <name>Cu(2+)</name>
        <dbReference type="ChEBI" id="CHEBI:29036"/>
        <label>2</label>
    </ligand>
</feature>
<feature type="binding site" evidence="53">
    <location>
        <position position="71"/>
    </location>
    <ligand>
        <name>Cu(2+)</name>
        <dbReference type="ChEBI" id="CHEBI:29036"/>
        <label>2</label>
    </ligand>
</feature>
<feature type="binding site" evidence="53">
    <location>
        <position position="77"/>
    </location>
    <ligand>
        <name>Cu(2+)</name>
        <dbReference type="ChEBI" id="CHEBI:29036"/>
        <label>3</label>
    </ligand>
</feature>
<feature type="binding site" evidence="53">
    <location>
        <position position="78"/>
    </location>
    <ligand>
        <name>Cu(2+)</name>
        <dbReference type="ChEBI" id="CHEBI:29036"/>
        <label>3</label>
    </ligand>
</feature>
<feature type="binding site" evidence="53">
    <location>
        <position position="79"/>
    </location>
    <ligand>
        <name>Cu(2+)</name>
        <dbReference type="ChEBI" id="CHEBI:29036"/>
        <label>3</label>
    </ligand>
</feature>
<feature type="binding site" evidence="53">
    <location>
        <position position="85"/>
    </location>
    <ligand>
        <name>Cu(2+)</name>
        <dbReference type="ChEBI" id="CHEBI:29036"/>
        <label>4</label>
    </ligand>
</feature>
<feature type="binding site" evidence="53">
    <location>
        <position position="86"/>
    </location>
    <ligand>
        <name>Cu(2+)</name>
        <dbReference type="ChEBI" id="CHEBI:29036"/>
        <label>4</label>
    </ligand>
</feature>
<feature type="binding site" evidence="53">
    <location>
        <position position="87"/>
    </location>
    <ligand>
        <name>Cu(2+)</name>
        <dbReference type="ChEBI" id="CHEBI:29036"/>
        <label>4</label>
    </ligand>
</feature>
<feature type="lipid moiety-binding region" description="GPI-anchor amidated serine" evidence="1">
    <location>
        <position position="230"/>
    </location>
</feature>
<feature type="glycosylation site" description="N-linked (GlcNAc...) asparagine" evidence="11">
    <location>
        <position position="181"/>
    </location>
</feature>
<feature type="glycosylation site" description="N-linked (GlcNAc...) asparagine" evidence="25">
    <location>
        <position position="197"/>
    </location>
</feature>
<feature type="disulfide bond" evidence="18">
    <location>
        <begin position="179"/>
        <end position="214"/>
    </location>
</feature>
<feature type="sequence variant" id="VAR_013763" evidence="15 20 36">
    <location>
        <begin position="56"/>
        <end position="63"/>
    </location>
</feature>
<feature type="sequence variant" id="VAR_006464" description="In GSD and early-onset dementia; dbSNP:rs74315401." evidence="5 33 35 38 45">
    <original>P</original>
    <variation>L</variation>
    <location>
        <position position="102"/>
    </location>
</feature>
<feature type="sequence variant" id="VAR_006465" description="In GSD; dbSNP:rs11538758." evidence="37 40">
    <original>P</original>
    <variation>L</variation>
    <location>
        <position position="105"/>
    </location>
</feature>
<feature type="sequence variant" id="VAR_006466" description="Linked to development of dementing Gerstmann-Straussler disease; dbSNP:rs74315402." evidence="35">
    <original>A</original>
    <variation>V</variation>
    <location>
        <position position="117"/>
    </location>
</feature>
<feature type="sequence variant" id="VAR_073722" description="Protective factor against Kuru; protective factor against prion disease; confers protection against classical Creutzfeldt-Jakob disease (CJD) and Kuru in the heterozygous state but can be infected with variant CJD prions resulting from exposure to bovine spongiform encephalopathy prions; confers complete resistance to all prion strains when homozygous; acts as a 'dominant negative' inhibitor of prion conversion; is not only itself resistant to conformational conversion, but also inhibits conversion of wild-type proteins; dbSNP:rs267606980." evidence="27 34">
    <original>G</original>
    <variation>V</variation>
    <location>
        <position position="127"/>
    </location>
</feature>
<feature type="sequence variant" id="VAR_006467" description="Protective factor against acquired, sporadic and some inherited prion diseases in the heterozygous state, possibly by preventing homodimerization; determines the disease phenotype in patients who have a PrP mutation at position 178; patients with M-129 develop FFI, those with V-129 develop CJD; dbSNP:rs1799990." evidence="12 17 28 35">
    <original>M</original>
    <variation>V</variation>
    <location>
        <position position="129"/>
    </location>
</feature>
<feature type="sequence variant" id="VAR_014264" description="In GSD; dbSNP:rs74315410." evidence="9">
    <original>G</original>
    <variation>V</variation>
    <location>
        <position position="131"/>
    </location>
</feature>
<feature type="sequence variant" id="VAR_006468" description="In schizoaffective disorder; dbSNP:rs16990018." evidence="48">
    <original>N</original>
    <variation>S</variation>
    <location>
        <position position="171"/>
    </location>
</feature>
<feature type="sequence variant" id="VAR_006469" description="In FFI and CJD; dbSNP:rs74315403." evidence="14 17 19 28">
    <original>D</original>
    <variation>N</variation>
    <location>
        <position position="178"/>
    </location>
</feature>
<feature type="sequence variant" id="VAR_006470" description="In CJD; dbSNP:rs74315408." evidence="17 28 44">
    <original>V</original>
    <variation>I</variation>
    <location>
        <position position="180"/>
    </location>
</feature>
<feature type="sequence variant" id="VAR_006471" description="In SENF and early-onset dementia; induces loss of glycosylation at N-181; dbSNP:rs74315411." evidence="5 11 47">
    <original>T</original>
    <variation>A</variation>
    <location>
        <position position="183"/>
    </location>
</feature>
<feature type="sequence variant" id="VAR_008746" description="In GSD; dbSNP:rs74315413." evidence="4">
    <original>H</original>
    <variation>R</variation>
    <location>
        <position position="187"/>
    </location>
</feature>
<feature type="sequence variant" id="VAR_008748" description="In early-onset dementia and dementia due to prion diseases." evidence="5">
    <original>T</original>
    <variation>K</variation>
    <location>
        <position position="188"/>
    </location>
</feature>
<feature type="sequence variant" id="VAR_008747" description="In dbSNP:rs372878791." evidence="7">
    <original>T</original>
    <variation>R</variation>
    <location>
        <position position="188"/>
    </location>
</feature>
<feature type="sequence variant" id="VAR_008749" description="In CJD." evidence="6">
    <original>E</original>
    <variation>K</variation>
    <location>
        <position position="196"/>
    </location>
</feature>
<feature type="sequence variant" id="VAR_006472" description="In GSD; atypical form with neurofibrillary tangles; dbSNP:rs74315405." evidence="28">
    <original>F</original>
    <variation>S</variation>
    <location>
        <position position="198"/>
    </location>
</feature>
<feature type="sequence variant" id="VAR_006473" description="In CJD; dbSNP:rs28933385." evidence="26 41 42">
    <original>E</original>
    <variation>K</variation>
    <location>
        <position position="200"/>
    </location>
</feature>
<feature type="sequence variant" id="VAR_008750" description="In GSD; dbSNP:rs761807915." evidence="50">
    <original>D</original>
    <variation>N</variation>
    <location>
        <position position="202"/>
    </location>
</feature>
<feature type="sequence variant" id="VAR_008751" description="In CJD; uncertain significance; dbSNP:rs776593792." evidence="6">
    <original>V</original>
    <variation>I</variation>
    <location>
        <position position="203"/>
    </location>
</feature>
<feature type="sequence variant" id="VAR_006474" description="In CJD; dbSNP:rs74315412." evidence="46">
    <original>R</original>
    <variation>H</variation>
    <location>
        <position position="208"/>
    </location>
</feature>
<feature type="sequence variant" id="VAR_006475" description="In CJD; dbSNP:rs74315407." evidence="39">
    <original>V</original>
    <variation>I</variation>
    <location>
        <position position="210"/>
    </location>
</feature>
<feature type="sequence variant" id="VAR_008752" description="In CJD; dbSNP:rs398122370." evidence="6">
    <original>E</original>
    <variation>Q</variation>
    <location>
        <position position="211"/>
    </location>
</feature>
<feature type="sequence variant" id="VAR_008753" description="In GSD; dbSNP:rs751882709." evidence="50">
    <original>Q</original>
    <variation>P</variation>
    <location>
        <position position="212"/>
    </location>
</feature>
<feature type="sequence variant" id="VAR_006476" description="In GSD; with neurofibrillary tangles; dbSNP:rs74315406." evidence="16">
    <original>Q</original>
    <variation>R</variation>
    <location>
        <position position="217"/>
    </location>
</feature>
<feature type="sequence variant" id="VAR_006477" description="Confers relative protection against sporadic Creutzfeldt-Jakob disease (CJD) in the heterozygous state; dbSNP:rs1800014." evidence="45 49">
    <original>E</original>
    <variation>K</variation>
    <location>
        <position position="219"/>
    </location>
</feature>
<feature type="sequence variant" id="VAR_006478" description="In CJD; dbSNP:rs74315409." evidence="44">
    <original>M</original>
    <variation>R</variation>
    <location>
        <position position="232"/>
    </location>
</feature>
<feature type="sequence variant" id="VAR_008754" evidence="7">
    <original>P</original>
    <variation>S</variation>
    <location>
        <position position="238"/>
    </location>
</feature>
<feature type="sequence conflict" description="In Ref. 9; AAA19664/BAA00011." evidence="52" ref="9">
    <location>
        <position position="118"/>
    </location>
</feature>
<feature type="sequence conflict" description="In Ref. 6; ABD63004." evidence="52" ref="6">
    <original>Y</original>
    <variation>H</variation>
    <location>
        <position position="169"/>
    </location>
</feature>
<feature type="sequence conflict" description="In Ref. 8; AAH22532." evidence="52" ref="8">
    <original>Q</original>
    <variation>K</variation>
    <location>
        <position position="227"/>
    </location>
</feature>
<feature type="strand" evidence="60">
    <location>
        <begin position="63"/>
        <end position="67"/>
    </location>
</feature>
<feature type="strand" evidence="60">
    <location>
        <begin position="70"/>
        <end position="73"/>
    </location>
</feature>
<feature type="turn" evidence="60">
    <location>
        <begin position="74"/>
        <end position="76"/>
    </location>
</feature>
<feature type="strand" evidence="59">
    <location>
        <begin position="79"/>
        <end position="82"/>
    </location>
</feature>
<feature type="strand" evidence="69">
    <location>
        <begin position="92"/>
        <end position="95"/>
    </location>
</feature>
<feature type="strand" evidence="68">
    <location>
        <begin position="99"/>
        <end position="101"/>
    </location>
</feature>
<feature type="strand" evidence="71">
    <location>
        <begin position="109"/>
        <end position="112"/>
    </location>
</feature>
<feature type="turn" evidence="71">
    <location>
        <begin position="114"/>
        <end position="117"/>
    </location>
</feature>
<feature type="strand" evidence="67">
    <location>
        <begin position="118"/>
        <end position="122"/>
    </location>
</feature>
<feature type="strand" evidence="58">
    <location>
        <begin position="125"/>
        <end position="127"/>
    </location>
</feature>
<feature type="strand" evidence="65">
    <location>
        <begin position="128"/>
        <end position="131"/>
    </location>
</feature>
<feature type="strand" evidence="71">
    <location>
        <begin position="133"/>
        <end position="135"/>
    </location>
</feature>
<feature type="strand" evidence="71">
    <location>
        <begin position="138"/>
        <end position="140"/>
    </location>
</feature>
<feature type="strand" evidence="56">
    <location>
        <begin position="141"/>
        <end position="143"/>
    </location>
</feature>
<feature type="helix" evidence="67">
    <location>
        <begin position="144"/>
        <end position="153"/>
    </location>
</feature>
<feature type="helix" evidence="67">
    <location>
        <begin position="154"/>
        <end position="156"/>
    </location>
</feature>
<feature type="strand" evidence="57">
    <location>
        <begin position="159"/>
        <end position="163"/>
    </location>
</feature>
<feature type="helix" evidence="67">
    <location>
        <begin position="166"/>
        <end position="168"/>
    </location>
</feature>
<feature type="turn" evidence="61">
    <location>
        <begin position="171"/>
        <end position="173"/>
    </location>
</feature>
<feature type="strand" evidence="66">
    <location>
        <begin position="178"/>
        <end position="181"/>
    </location>
</feature>
<feature type="strand" evidence="70">
    <location>
        <begin position="182"/>
        <end position="185"/>
    </location>
</feature>
<feature type="strand" evidence="70">
    <location>
        <begin position="189"/>
        <end position="192"/>
    </location>
</feature>
<feature type="turn" evidence="63">
    <location>
        <begin position="193"/>
        <end position="195"/>
    </location>
</feature>
<feature type="strand" evidence="70">
    <location>
        <begin position="196"/>
        <end position="202"/>
    </location>
</feature>
<feature type="strand" evidence="70">
    <location>
        <begin position="205"/>
        <end position="210"/>
    </location>
</feature>
<feature type="strand" evidence="66">
    <location>
        <begin position="212"/>
        <end position="215"/>
    </location>
</feature>
<feature type="turn" evidence="64">
    <location>
        <begin position="223"/>
        <end position="225"/>
    </location>
</feature>
<feature type="turn" evidence="62">
    <location>
        <begin position="228"/>
        <end position="230"/>
    </location>
</feature>
<gene>
    <name type="primary">PRNP</name>
    <name type="synonym">ALTPRP</name>
    <name type="synonym">PRIP</name>
    <name type="synonym">PRP</name>
</gene>
<comment type="function">
    <text evidence="2 13 29 31 52">Its primary physiological function is unclear. May play a role in neuronal development and synaptic plasticity. May be required for neuronal myelin sheath maintenance. May promote myelin homeostasis through acting as an agonist for ADGRG6 receptor. May play a role in iron uptake and iron homeostasis. Soluble oligomers are toxic to cultured neuroblastoma cells and induce apoptosis (in vitro) (By similarity). Association with GPC1 (via its heparan sulfate chains) targets PRNP to lipid rafts. Also provides Cu(2+) or Zn(2+) for the ascorbate-mediated GPC1 deaminase degradation of its heparan sulfate side chains (By similarity).</text>
</comment>
<comment type="subunit">
    <text evidence="2 8 10 18 22 24 28 30 31 32">Monomer and homodimer. Has a tendency to aggregate into amyloid fibrils containing a cross-beta spine, formed by a steric zipper of superposed beta-strands. Soluble oligomers may represent an intermediate stage on the path to fibril formation. Copper binding may promote oligomerization (PubMed:11524679, PubMed:11900542, PubMed:14623188, PubMed:17468747, PubMed:19204296, PubMed:19927125, PubMed:20375014, PubMed:20564047). Interacts with GRB2, APP, ERI3/PRNPIP and SYN1. Mislocalized cytosolically exposed PrP interacts with MGRN1; this interaction alters MGRN1 subcellular location and causes lysosomal enlargement (By similarity). Interacts with KIAA1191 (PubMed:21153684). Interacts with ADGRG6 (By similarity).</text>
</comment>
<comment type="interaction">
    <interactant intactId="EBI-977302">
        <id>P04156</id>
    </interactant>
    <interactant intactId="EBI-527363">
        <id>Q9UL18</id>
        <label>AGO1</label>
    </interactant>
    <organismsDiffer>false</organismsDiffer>
    <experiments>2</experiments>
</comment>
<comment type="interaction">
    <interactant intactId="EBI-977302">
        <id>P04156</id>
    </interactant>
    <interactant intactId="EBI-528269">
        <id>Q9UKV8</id>
        <label>AGO2</label>
    </interactant>
    <organismsDiffer>false</organismsDiffer>
    <experiments>4</experiments>
</comment>
<comment type="interaction">
    <interactant intactId="EBI-977302">
        <id>P04156</id>
    </interactant>
    <interactant intactId="EBI-77613">
        <id>P05067</id>
        <label>APP</label>
    </interactant>
    <organismsDiffer>false</organismsDiffer>
    <experiments>6</experiments>
</comment>
<comment type="interaction">
    <interactant intactId="EBI-977302">
        <id>P04156</id>
    </interactant>
    <interactant intactId="EBI-302641">
        <id>P05067-4</id>
        <label>APP</label>
    </interactant>
    <organismsDiffer>false</organismsDiffer>
    <experiments>2</experiments>
</comment>
<comment type="interaction">
    <interactant intactId="EBI-977302">
        <id>P04156</id>
    </interactant>
    <interactant intactId="EBI-821758">
        <id>PRO_0000000092</id>
        <label>APP</label>
        <dbReference type="UniProtKB" id="P05067"/>
    </interactant>
    <organismsDiffer>false</organismsDiffer>
    <experiments>3</experiments>
</comment>
<comment type="interaction">
    <interactant intactId="EBI-977302">
        <id>P04156</id>
    </interactant>
    <interactant intactId="EBI-2410266">
        <id>Q8WXF7</id>
        <label>ATL1</label>
    </interactant>
    <organismsDiffer>false</organismsDiffer>
    <experiments>3</experiments>
</comment>
<comment type="interaction">
    <interactant intactId="EBI-977302">
        <id>P04156</id>
    </interactant>
    <interactant intactId="EBI-2513837">
        <id>P25311</id>
        <label>AZGP1</label>
    </interactant>
    <organismsDiffer>false</organismsDiffer>
    <experiments>4</experiments>
</comment>
<comment type="interaction">
    <interactant intactId="EBI-977302">
        <id>P04156</id>
    </interactant>
    <interactant intactId="EBI-4303189">
        <id>P55085</id>
        <label>F2RL1</label>
    </interactant>
    <organismsDiffer>false</organismsDiffer>
    <experiments>3</experiments>
</comment>
<comment type="interaction">
    <interactant intactId="EBI-977302">
        <id>P04156</id>
    </interactant>
    <interactant intactId="EBI-912547">
        <id>Q13642</id>
        <label>FHL1</label>
    </interactant>
    <organismsDiffer>false</organismsDiffer>
    <experiments>3</experiments>
</comment>
<comment type="interaction">
    <interactant intactId="EBI-977302">
        <id>P04156</id>
    </interactant>
    <interactant intactId="EBI-746917">
        <id>O75084</id>
        <label>FZD7</label>
    </interactant>
    <organismsDiffer>false</organismsDiffer>
    <experiments>3</experiments>
</comment>
<comment type="interaction">
    <interactant intactId="EBI-977302">
        <id>P04156</id>
    </interactant>
    <interactant intactId="EBI-740785">
        <id>P49639</id>
        <label>HOXA1</label>
    </interactant>
    <organismsDiffer>false</organismsDiffer>
    <experiments>4</experiments>
</comment>
<comment type="interaction">
    <interactant intactId="EBI-977302">
        <id>P04156</id>
    </interactant>
    <interactant intactId="EBI-466029">
        <id>P42858</id>
        <label>HTT</label>
    </interactant>
    <organismsDiffer>false</organismsDiffer>
    <experiments>13</experiments>
</comment>
<comment type="interaction">
    <interactant intactId="EBI-977302">
        <id>P04156</id>
    </interactant>
    <interactant intactId="EBI-366182">
        <id>P10636</id>
        <label>MAPT</label>
    </interactant>
    <organismsDiffer>false</organismsDiffer>
    <experiments>2</experiments>
</comment>
<comment type="interaction">
    <interactant intactId="EBI-977302">
        <id>P04156</id>
    </interactant>
    <interactant intactId="EBI-1043398">
        <id>P29372</id>
        <label>MPG</label>
    </interactant>
    <organismsDiffer>false</organismsDiffer>
    <experiments>4</experiments>
</comment>
<comment type="interaction">
    <interactant intactId="EBI-977302">
        <id>P04156</id>
    </interactant>
    <interactant intactId="EBI-2568609">
        <id>Q9BSJ6</id>
        <label>PIMREG</label>
    </interactant>
    <organismsDiffer>false</organismsDiffer>
    <experiments>5</experiments>
</comment>
<comment type="interaction">
    <interactant intactId="EBI-977302">
        <id>P04156</id>
    </interactant>
    <interactant intactId="EBI-751877">
        <id>Q9H4B4</id>
        <label>PLK3</label>
    </interactant>
    <organismsDiffer>false</organismsDiffer>
    <experiments>4</experiments>
</comment>
<comment type="interaction">
    <interactant intactId="EBI-977302">
        <id>P04156</id>
    </interactant>
    <interactant intactId="EBI-353193">
        <id>Q06830</id>
        <label>PRDX1</label>
    </interactant>
    <organismsDiffer>false</organismsDiffer>
    <experiments>4</experiments>
</comment>
<comment type="interaction">
    <interactant intactId="EBI-977302">
        <id>P04156</id>
    </interactant>
    <interactant intactId="EBI-977302">
        <id>P04156</id>
        <label>PRNP</label>
    </interactant>
    <organismsDiffer>false</organismsDiffer>
    <experiments>33</experiments>
</comment>
<comment type="interaction">
    <interactant intactId="EBI-977302">
        <id>P04156</id>
    </interactant>
    <interactant intactId="EBI-11528848">
        <id>Q8N6K7-2</id>
        <label>SAMD3</label>
    </interactant>
    <organismsDiffer>false</organismsDiffer>
    <experiments>3</experiments>
</comment>
<comment type="interaction">
    <interactant intactId="EBI-977302">
        <id>P04156</id>
    </interactant>
    <interactant intactId="EBI-528299">
        <id>Q8CJG0</id>
        <label>Ago2</label>
    </interactant>
    <organismsDiffer>true</organismsDiffer>
    <experiments>2</experiments>
</comment>
<comment type="interaction">
    <interactant intactId="EBI-977302">
        <id>P04156</id>
    </interactant>
    <interactant intactId="EBI-768613">
        <id>P04925</id>
        <label>Prnp</label>
    </interactant>
    <organismsDiffer>true</organismsDiffer>
    <experiments>3</experiments>
</comment>
<comment type="interaction">
    <interactant intactId="EBI-977302">
        <id>P04156</id>
    </interactant>
    <interactant intactId="EBI-7430632">
        <id>P10279</id>
        <label>PRNP</label>
    </interactant>
    <organismsDiffer>true</organismsDiffer>
    <experiments>5</experiments>
</comment>
<comment type="interaction">
    <interactant intactId="EBI-977302">
        <id>P04156</id>
    </interactant>
    <interactant intactId="EBI-7670302">
        <id>P23907</id>
        <label>PRNP</label>
    </interactant>
    <organismsDiffer>true</organismsDiffer>
    <experiments>3</experiments>
</comment>
<comment type="interaction">
    <interactant intactId="EBI-8830282">
        <id>PRO_0000025675</id>
    </interactant>
    <interactant intactId="EBI-8830305">
        <id>P31424-2</id>
        <label>Grm5</label>
    </interactant>
    <organismsDiffer>true</organismsDiffer>
    <experiments>4</experiments>
</comment>
<comment type="interaction">
    <interactant intactId="EBI-8830282">
        <id>PRO_0000025675</id>
    </interactant>
    <interactant intactId="EBI-647785">
        <id>P52480</id>
        <label>Pkm</label>
    </interactant>
    <organismsDiffer>true</organismsDiffer>
    <experiments>5</experiments>
</comment>
<comment type="subcellular location">
    <subcellularLocation>
        <location>Cell membrane</location>
        <topology evidence="29">Lipid-anchor</topology>
        <topology evidence="29">GPI-anchor</topology>
    </subcellularLocation>
    <subcellularLocation>
        <location evidence="2">Golgi apparatus</location>
    </subcellularLocation>
    <text evidence="29">Targeted to lipid rafts via association with the heparan sulfate chains of GPC1. Colocates, in the presence of Cu(2+), to vesicles in para- and perinuclear regions, where both proteins undergo internalization. Heparin displaces PRNP from lipid rafts and promotes endocytosis.</text>
</comment>
<comment type="alternative products">
    <event type="alternative initiation"/>
    <isoform>
        <id>P04156-1</id>
        <name>1</name>
        <name>PrP</name>
        <sequence type="displayed"/>
    </isoform>
    <isoform>
        <id>F7VJQ1-1</id>
        <name>3</name>
        <name>AltPrP</name>
        <sequence type="external"/>
    </isoform>
</comment>
<comment type="domain">
    <text evidence="22 28 31">The normal, monomeric form, PRPN(C), has a mainly alpha-helical structure. Misfolding of this form produces a disease-associated, protease-resistant form, PRPN (Sc), accompanied by a large increase of the beta-sheet content and formation of amyloid fibrils. These fibrils consist of a cross-beta spine, formed by a steric zipper of superposed beta-strands. Disease mutations may favor intermolecular contacts via short beta strands, and may thereby trigger oligomerization. In addition, the heparan-sulfate proteoglycan, GPC1, promotes the association of PRPN (C) to lipid rafts and appears to facilitate the conversion to PRPN (Sc).</text>
</comment>
<comment type="domain">
    <text evidence="8 10 30">Contains an N-terminal region composed of octamer repeats. At low copper concentrations, the sidechains of His residues from three or four repeats contribute to the binding of a single copper ion. Alternatively, a copper ion can be bound by interaction with the sidechain and backbone amide nitrogen of a single His residue. The observed copper binding stoichiometry suggests that two repeat regions cooperate to stabilize the binding of a single copper ion. At higher copper concentrations, each octamer can bind one copper ion by interactions with the His sidechain and Gly backbone atoms. A mixture of binding types may occur, especially in the case of octamer repeat expansion. Copper binding may stabilize the conformation of this region and may promote oligomerization.</text>
</comment>
<comment type="PTM">
    <text evidence="11">The glycosylation pattern (the amount of mono-, di- and non-glycosylated forms or glycoforms) seems to differ in normal and CJD prion.</text>
</comment>
<comment type="polymorphism">
    <text evidence="21">The five tandem octapeptide repeats region is highly unstable. Insertions or deletions of octapeptide repeat units are associated to prion disease.</text>
</comment>
<comment type="polymorphism">
    <text evidence="17 34 49">A number of polymorphisms confer resistance to prion diseases (PubMed:1439789, PubMed:19923577, PubMed:26061765, PubMed:9482303). Val-127 has been selected for in response to the Kuru epidemic and confers resistance to prion disease by acting as a 'dominant negative' inhibitor of prion conversion (PubMed:26061765). Val-127 is not only itself resistant to conformational conversion, but also inhibits conversion of wild-type proteins. Confers protection against classical Creutzfeldt-Jakob disease (CJD) and Kuru in the heterozygous state, but can be infected with variant CJD prions, resulting from exposure to bovine spongiform encephalopathy prions. Confers complete resistance to all prion strains when homozygous (PubMed:26061765). Always associated with M-129 variant (PubMed:26061765). Val-129 confers relative protection against acquired, sporadic and some inherited prion diseases in the heterozygous state, possibly by preventing homodimerization (PubMed:1439789). Lys-219 confers relative protection against sporadic Creutzfeldt-Jakob disease (CJD) in the heterozygous state (PubMed:9482303).</text>
</comment>
<comment type="disease">
    <text evidence="43">PrP is found in high quantity in the brain of humans and animals infected with neurodegenerative diseases known as transmissible spongiform encephalopathies or prion diseases, like: Creutzfeldt-Jakob disease (CJD), fatal familial insomnia (FFI), Gerstmann-Straussler disease (GSD), Huntington disease-like type 1 (HDL1) and kuru in humans; scrapie in sheep and goat; bovine spongiform encephalopathy (BSE) in cattle; transmissible mink encephalopathy (TME); chronic wasting disease (CWD) of mule deer and elk; feline spongiform encephalopathy (FSE) in cats and exotic ungulate encephalopathy (EUE) in nyala and greater kudu. The prion diseases illustrate three manifestations of CNS degeneration: (1) infectious (2) sporadic and (3) dominantly inherited forms. TME, CWD, BSE, FSE, EUE are all thought to occur after consumption of prion-infected foodstuffs.</text>
</comment>
<comment type="disease" evidence="6 17 19 26 28 39 41 42 44 46">
    <disease id="DI-01448">
        <name>Creutzfeldt-Jakob disease</name>
        <acronym>CJD</acronym>
        <description>Occurs primarily as a sporadic disorder (1 per million), while 10-15% are familial. Accidental transmission of CJD to humans appears to be iatrogenic (contaminated human growth hormone (HGH), corneal transplantation, electroencephalographic electrode implantation, etc.). Epidemiologic studies have failed to implicate the ingestion of infected animal meat in the pathogenesis of CJD in human. The triad of microscopic features that characterize the prion diseases consists of (1) spongiform degeneration of neurons, (2) severe astrocytic gliosis that often appears to be out of proportion to the degree of nerve cell loss, and (3) amyloid plaque formation. CJD is characterized by progressive dementia and myoclonic seizures, affecting adults in mid-life. Some patients present sleep disorders, abnormalities of high cortical function, cerebellar and corticospinal disturbances. The disease ends in death after a 3-12 months illness.</description>
        <dbReference type="MIM" id="123400"/>
    </disease>
    <text>The disease is caused by variants affecting the gene represented in this entry.</text>
</comment>
<comment type="disease" evidence="14 17 28">
    <disease id="DI-01607">
        <name>Fatal familial insomnia</name>
        <acronym>FFI</acronym>
        <description>Autosomal dominant disorder and is characterized by neuronal degeneration limited to selected thalamic nuclei and progressive insomnia.</description>
        <dbReference type="MIM" id="600072"/>
    </disease>
    <text>The disease is caused by variants affecting the gene represented in this entry.</text>
</comment>
<comment type="disease" evidence="4 9 16 17 28 33 37 38 40 45 50">
    <disease id="DI-01656">
        <name>Gerstmann-Straussler disease</name>
        <acronym>GSD</acronym>
        <description>A rare inherited prion disease characterized by adult onset of memory loss, dementia, ataxia, and pathologic deposition of amyloid-like plaques in the brain. GSD presents with progressive limb and truncal ataxia, dysarthria, and cognitive decline in the thirties and forties, and the average disease duration is 7 years.</description>
        <dbReference type="MIM" id="137440"/>
    </disease>
    <text>The disease is caused by variants affecting the gene represented in this entry.</text>
</comment>
<comment type="disease" evidence="51">
    <disease id="DI-01755">
        <name>Huntington disease-like 1</name>
        <acronym>HDL1</acronym>
        <description>Autosomal dominant, early-onset neurodegenerative disorder with prominent psychiatric features.</description>
        <dbReference type="MIM" id="603218"/>
    </disease>
    <text>The disease is caused by variants affecting the gene represented in this entry.</text>
</comment>
<comment type="disease" evidence="27 34">
    <disease id="DI-01871">
        <name>Kuru</name>
        <acronym>KURU</acronym>
        <description>Kuru is transmitted during ritualistic cannibalism, among natives of the New Guinea highlands. Patients exhibit various movement disorders like cerebellar abnormalities, rigidity of the limbs, and clonus. Emotional lability is present, and dementia is conspicuously absent. Death usually occurs from 3 to 12 month after onset.</description>
        <dbReference type="MIM" id="245300"/>
    </disease>
    <text>Disease susceptibility is associated with variants affecting the gene represented in this entry.</text>
</comment>
<comment type="disease" evidence="11 47">
    <disease id="DI-02210">
        <name>Spongiform encephalopathy with neuropsychiatric features</name>
        <acronym>SENF</acronym>
        <description>Autosomal dominant presenile dementia with a rapidly progressive and protracted clinical course. The dementia was characterized clinically by frontotemporal features, including early personality changes. Some patients had memory loss, several showed aggressiveness, hyperorality and verbal stereotypy, others had parkinsonian symptoms.</description>
        <dbReference type="MIM" id="606688"/>
    </disease>
    <text>The disease is caused by variants affecting the gene represented in this entry.</text>
</comment>
<comment type="miscellaneous">
    <text evidence="54">This protein is produced by a bicistronic gene which also produces the alternative prion protein/AltPrP (AC F7VJQ1) from an overlapping reading frame.</text>
</comment>
<comment type="miscellaneous">
    <text evidence="52">The alternative prion protein/AltPrP (AC F7VJQ1) and PRNP have no apparent direct functional relation since a mutation that removes the start codon of the AltPrP has no apparent effect on the biology of PRNP. In mouse and hamster, the alternative initiation AUG codon is absent and is replaced by a GUG codon.</text>
</comment>
<comment type="similarity">
    <text evidence="52">Belongs to the prion family.</text>
</comment>
<comment type="caution">
    <text evidence="23 55">An isoform was shown to be localized to both the cytoplasm and the nucleus and to be sumoylated with SUMO1 (PubMed:19059915). The article has later been withdrawn by the authors.</text>
</comment>
<comment type="online information" name="Wikipedia">
    <link uri="https://en.wikipedia.org/wiki/PRNP"/>
    <text>PRNP entry</text>
</comment>
<comment type="online information" name="Protein Spotlight">
    <link uri="https://www.proteinspotlight.org/back_issues/179/"/>
    <text>The shape of harm - Issue 179 of May 2016</text>
</comment>
<proteinExistence type="evidence at protein level"/>